<gene>
    <name type="primary">HNF1A</name>
    <name type="synonym">TCF1</name>
</gene>
<protein>
    <recommendedName>
        <fullName>Hepatocyte nuclear factor 1-alpha</fullName>
        <shortName>HNF-1-alpha</shortName>
        <shortName>HNF-1A</shortName>
    </recommendedName>
    <alternativeName>
        <fullName>Liver-specific transcription factor LF-B1</fullName>
        <shortName>LFB1</shortName>
    </alternativeName>
    <alternativeName>
        <fullName>Transcription factor 1</fullName>
        <shortName>TCF-1</shortName>
    </alternativeName>
</protein>
<sequence length="631" mass="67386">MVSKLSQLQTELLAALLESGLSKEALIQALGEPGPYLLAGEGPLDKGESCGGGRGELAELPNGLGETRGSEDETDDDGEDFTPPILKELENLSPEEAAHQKAVVETLLQEDPWRVAKMVKSYLQQHNIPQREVVDTTGLNQSHLSQHLNKGTPMKTQKRAALYTWYVRKQREVAQQFTHAGQGGLIEEPTGDELPTKKGRRNRFKWGPASQQILFQAYERQKNPSKEERETLVEECNRAECIQRGVSPSQAQGLGSNLVTEVRVYNWFANRRKEEAFRHKLAMDTYSGPPPGPGPGPALPAHSSPGLPPPALSPSKVHGVRYGQPATSETAEVPSSSGGPLVTVSTPLHQVSPTGLEPSHSLLSTEAKLVSAAGGPLPPVSTLTALHSLEQTSPGLNQQPQNLIMASLPGVMTIGPGEPASLGPTFTNTGASTLVIGLASTQAQSVPVINSMGSSLTTLQPVQFSQPLHPSYQQPLMPPVQSHVTQSPFMATMAQLQSPHALYSHKPEVAQYTHTGLLPQTMLITDTTNLSALASLTPTKQVFTSDTEASSESGLHTPASQATTLHVPSQDPASIQHLQPAHRLSASPTVSSSSLVLYQSSDSSNGQSHLLPSNHSVIETFISTQMASSSQ</sequence>
<feature type="chain" id="PRO_0000049115" description="Hepatocyte nuclear factor 1-alpha">
    <location>
        <begin position="1"/>
        <end position="631"/>
    </location>
</feature>
<feature type="domain" description="HNF-p1" evidence="4">
    <location>
        <begin position="1"/>
        <end position="32"/>
    </location>
</feature>
<feature type="domain" description="POU-specific atypical" evidence="3">
    <location>
        <begin position="87"/>
        <end position="182"/>
    </location>
</feature>
<feature type="DNA-binding region" description="Homeobox; HNF1-type" evidence="2">
    <location>
        <begin position="199"/>
        <end position="279"/>
    </location>
</feature>
<feature type="region of interest" description="Dimerization">
    <location>
        <begin position="1"/>
        <end position="31"/>
    </location>
</feature>
<feature type="region of interest" description="Disordered" evidence="5">
    <location>
        <begin position="40"/>
        <end position="81"/>
    </location>
</feature>
<feature type="region of interest" description="Interaction with DNA">
    <location>
        <begin position="130"/>
        <end position="132"/>
    </location>
</feature>
<feature type="region of interest" description="Interaction with DNA">
    <location>
        <begin position="143"/>
        <end position="149"/>
    </location>
</feature>
<feature type="region of interest" description="Interaction with DNA">
    <location>
        <begin position="155"/>
        <end position="158"/>
    </location>
</feature>
<feature type="region of interest" description="Disordered" evidence="5">
    <location>
        <begin position="183"/>
        <end position="205"/>
    </location>
</feature>
<feature type="region of interest" description="Interaction with DNA">
    <location>
        <begin position="203"/>
        <end position="206"/>
    </location>
</feature>
<feature type="region of interest" description="Interaction with DNA">
    <location>
        <begin position="263"/>
        <end position="265"/>
    </location>
</feature>
<feature type="region of interest" description="Interaction with DNA">
    <location>
        <begin position="270"/>
        <end position="273"/>
    </location>
</feature>
<feature type="region of interest" description="Disordered" evidence="5">
    <location>
        <begin position="283"/>
        <end position="358"/>
    </location>
</feature>
<feature type="region of interest" description="Disordered" evidence="5">
    <location>
        <begin position="545"/>
        <end position="567"/>
    </location>
</feature>
<feature type="short sequence motif" description="Nuclear localization signal" evidence="42">
    <location>
        <begin position="197"/>
        <end position="205"/>
    </location>
</feature>
<feature type="compositionally biased region" description="Pro residues" evidence="5">
    <location>
        <begin position="288"/>
        <end position="298"/>
    </location>
</feature>
<feature type="compositionally biased region" description="Polar residues" evidence="5">
    <location>
        <begin position="325"/>
        <end position="353"/>
    </location>
</feature>
<feature type="modified residue" description="Phosphoserine" evidence="1">
    <location>
        <position position="70"/>
    </location>
</feature>
<feature type="modified residue" description="Phosphothreonine" evidence="1">
    <location>
        <position position="74"/>
    </location>
</feature>
<feature type="modified residue" description="Phosphoserine" evidence="43">
    <location>
        <position position="93"/>
    </location>
</feature>
<feature type="modified residue" description="Phosphoserine" evidence="43">
    <location>
        <position position="247"/>
    </location>
</feature>
<feature type="modified residue" description="Phosphoserine" evidence="1">
    <location>
        <position position="313"/>
    </location>
</feature>
<feature type="cross-link" description="Glycyl lysine isopeptide (Lys-Gly) (interchain with G-Cter in ubiquitin)" evidence="20">
    <location>
        <position position="117"/>
    </location>
</feature>
<feature type="splice variant" id="VSP_053324" description="In isoform 6." evidence="40">
    <location>
        <begin position="1"/>
        <end position="117"/>
    </location>
</feature>
<feature type="splice variant" id="VSP_054300" description="In isoform 8." evidence="42">
    <original>EDPWRVAKMV</original>
    <variation>VHPCRAGRAD</variation>
    <location>
        <begin position="110"/>
        <end position="119"/>
    </location>
</feature>
<feature type="splice variant" id="VSP_054301" description="In isoform 8." evidence="42">
    <location>
        <begin position="120"/>
        <end position="631"/>
    </location>
</feature>
<feature type="splice variant" id="VSP_047736" description="In isoform 4." evidence="40">
    <original>QFTHAGQGGLIEEPTGDELPTKKGRRNRFKWGPASQQILFQAYERQKNPSKEERETLVEECNRAECIQRGVSPSQAQGLGSNLVTEVRVYNWFANRRKEEAFR</original>
    <variation>RRNASREGCPHHRHRGWAPTSSRRCVSTTGLPTGAKKKPSGTSWPWTRTAGPPQGQARDLRCPLTAPLACLHLPSPPVRSTVCAMDSLRPVRLQKYPQAAAVP</variation>
    <location>
        <begin position="176"/>
        <end position="278"/>
    </location>
</feature>
<feature type="splice variant" id="VSP_047737" description="In isoform 5." evidence="40">
    <original>AECIQRGVS</original>
    <variation>CALWTACDQ</variation>
    <location>
        <begin position="239"/>
        <end position="247"/>
    </location>
</feature>
<feature type="splice variant" id="VSP_047738" description="In isoform 5." evidence="40">
    <location>
        <begin position="248"/>
        <end position="631"/>
    </location>
</feature>
<feature type="splice variant" id="VSP_047739" description="In isoform 4." evidence="40">
    <location>
        <begin position="279"/>
        <end position="631"/>
    </location>
</feature>
<feature type="splice variant" id="VSP_053325" description="In isoform 6." evidence="40">
    <original>LASTQAQSVPVINSMGSSLTTLQPVQFSQPLHPSYQQPLMPPVQSHVTQSPFMATMAQLQSPHALYSHKPEVAQYTHTGLLPQ</original>
    <variation>KLVGMGGHLGGRLMGQPQNPGAGRATGTHSFIHTTCIYPVPTLDQSLCYISDTWVNQTDQNLSNSSREAGTKHNTSILWYLRR</variation>
    <location>
        <begin position="438"/>
        <end position="520"/>
    </location>
</feature>
<feature type="splice variant" id="VSP_002252" description="In isoform C." evidence="42">
    <original>LASTQAQSVPVINSMGSSLTTLQPVQFSQPLHPSYQQPLMPPVQSHVTQSPFMATMA</original>
    <variation>KLVGMGGHLGGRLMGQPQNPGAGRATGTHSFIHSFIQHVFIQCLLWTSHCATSVIPG</variation>
    <location>
        <begin position="438"/>
        <end position="494"/>
    </location>
</feature>
<feature type="splice variant" id="VSP_002253" description="In isoform C." evidence="42">
    <location>
        <begin position="495"/>
        <end position="601"/>
    </location>
</feature>
<feature type="splice variant" id="VSP_002250" description="In isoform B." evidence="42">
    <original>ALYSHKPEVAQYTHTGLLPQTMLITDTTNLSALASLTPTKQV</original>
    <variation>GEHPVPHTAGDDDRGWLSMDAGERGAWQALQSACVSGTSVFP</variation>
    <location>
        <begin position="501"/>
        <end position="542"/>
    </location>
</feature>
<feature type="splice variant" id="VSP_053326" description="In isoform 6." evidence="40">
    <location>
        <begin position="521"/>
        <end position="631"/>
    </location>
</feature>
<feature type="splice variant" id="VSP_054302" description="In isoform 7." evidence="41">
    <original>K</original>
    <variation>KQVRSRPAGPPLACDRAPHPHIPRAQEAALLP</variation>
    <location>
        <position position="540"/>
    </location>
</feature>
<feature type="splice variant" id="VSP_002251" description="In isoform B." evidence="42">
    <location>
        <begin position="543"/>
        <end position="601"/>
    </location>
</feature>
<feature type="sequence variant" id="VAR_010537" description="In MODY3; uncertain significance; abolishes interaction with PCBD1 and DNA; dbSNP:rs2135819422." evidence="6 12 29">
    <original>L</original>
    <variation>H</variation>
    <location>
        <position position="12"/>
    </location>
</feature>
<feature type="sequence variant" id="VAR_012483" description="In MODY3; abolishes interaction with PCBD1 and DNA; dbSNP:rs1249563793." evidence="11 12">
    <original>G</original>
    <variation>R</variation>
    <location>
        <position position="20"/>
    </location>
</feature>
<feature type="sequence variant" id="VAR_007905" description="In dbSNP:rs1169288." evidence="16 26 27 30 33 34 38">
    <original>I</original>
    <variation>L</variation>
    <location>
        <position position="27"/>
    </location>
</feature>
<feature type="sequence variant" id="VAR_010538" description="In MODY3; benign; no effect on interaction with PCBD1 and DNA; dbSNP:rs137853247." evidence="12 19 36">
    <original>G</original>
    <variation>D</variation>
    <location>
        <position position="31"/>
    </location>
</feature>
<feature type="sequence variant" id="VAR_010539" description="In T1D20; likely benign; dbSNP:rs772222326." evidence="37">
    <original>E</original>
    <variation>K</variation>
    <location>
        <position position="48"/>
    </location>
</feature>
<feature type="sequence variant" id="VAR_010540" description="In dbSNP:rs1800574." evidence="26 27 38">
    <original>A</original>
    <variation>V</variation>
    <location>
        <position position="98"/>
    </location>
</feature>
<feature type="sequence variant" id="VAR_010541" description="In MODY3; dbSNP:rs2135820413." evidence="28">
    <original>L</original>
    <variation>R</variation>
    <location>
        <position position="107"/>
    </location>
</feature>
<feature type="sequence variant" id="VAR_010542" description="In MODY3; uncertain significance." evidence="8">
    <original>K</original>
    <variation>E</variation>
    <location>
        <position position="117"/>
    </location>
</feature>
<feature type="sequence variant" id="VAR_003756" description="In MODY3; dbSNP:rs137853237." evidence="25">
    <original>Y</original>
    <variation>C</variation>
    <location>
        <position position="122"/>
    </location>
</feature>
<feature type="sequence variant" id="VAR_033088" description="In a hepatocellular carcinoma sample; somatic mutation." evidence="13">
    <original>N</original>
    <variation>Y</variation>
    <location>
        <position position="127"/>
    </location>
</feature>
<feature type="sequence variant" id="VAR_010543" description="In MODY3; uncertain significance; dbSNP:rs2135832570." evidence="24">
    <original>I</original>
    <variation>N</variation>
    <location>
        <position position="128"/>
    </location>
</feature>
<feature type="sequence variant" id="VAR_010544" description="In MODY3; uncertain significance; dbSNP:rs1876669818." evidence="23">
    <original>P</original>
    <variation>T</variation>
    <location>
        <position position="129"/>
    </location>
</feature>
<feature type="sequence variant" id="VAR_010545" description="In MODY3; dbSNP:rs753998395." evidence="22 29">
    <original>R</original>
    <variation>Q</variation>
    <location>
        <position position="131"/>
    </location>
</feature>
<feature type="sequence variant" id="VAR_010546" description="In MODY3; dbSNP:rs137853244." evidence="23 28">
    <original>R</original>
    <variation>W</variation>
    <location>
        <position position="131"/>
    </location>
</feature>
<feature type="sequence variant" id="VAR_010547" description="In MODY3; dbSNP:rs2135832611." evidence="19">
    <original>V</original>
    <variation>M</variation>
    <location>
        <position position="133"/>
    </location>
</feature>
<feature type="sequence variant" id="VAR_003757" description="In MODY3; reduces transcription activation by about 80%; dbSNP:rs2135832668." evidence="14 25">
    <original>S</original>
    <variation>F</variation>
    <location>
        <position position="142"/>
    </location>
</feature>
<feature type="sequence variant" id="VAR_010548" description="In MODY3; dbSNP:rs2135832685." evidence="8 24">
    <original>H</original>
    <variation>Y</variation>
    <location>
        <position position="143"/>
    </location>
</feature>
<feature type="sequence variant" id="VAR_010549" description="In MODY3; uncertain significance." evidence="6">
    <original>K</original>
    <variation>N</variation>
    <location>
        <position position="158"/>
    </location>
</feature>
<feature type="sequence variant" id="VAR_003758" description="In MODY3; dbSNP:rs1172328722." evidence="6 25">
    <original>R</original>
    <variation>Q</variation>
    <location>
        <position position="159"/>
    </location>
</feature>
<feature type="sequence variant" id="VAR_010550" description="In MODY3; dbSNP:rs765432081." evidence="23 36">
    <original>R</original>
    <variation>W</variation>
    <location>
        <position position="159"/>
    </location>
</feature>
<feature type="sequence variant" id="VAR_010551" description="In MODY3; uncertain significance; dbSNP:rs201095611." evidence="36">
    <original>A</original>
    <variation>T</variation>
    <location>
        <position position="161"/>
    </location>
</feature>
<feature type="sequence variant" id="VAR_033089" description="In a hepatocellular carcinoma sample; somatic mutation; dbSNP:rs2135832874." evidence="13">
    <original>W</original>
    <variation>C</variation>
    <location>
        <position position="165"/>
    </location>
</feature>
<feature type="sequence variant" id="VAR_079478" description="In MODY3." evidence="19">
    <location>
        <begin position="171"/>
        <end position="631"/>
    </location>
</feature>
<feature type="sequence variant" id="VAR_010552" description="In late-onset NIDDM; dbSNP:rs1876932587." evidence="29">
    <original>G</original>
    <variation>D</variation>
    <location>
        <position position="191"/>
    </location>
</feature>
<feature type="sequence variant" id="VAR_063069" description="In MODY3; dbSNP:rs193922598." evidence="36">
    <original>R</original>
    <variation>W</variation>
    <location>
        <position position="200"/>
    </location>
</feature>
<feature type="sequence variant" id="VAR_010554" description="In MODY3; dbSNP:rs1180119907." evidence="6">
    <original>R</original>
    <variation>C</variation>
    <location>
        <position position="203"/>
    </location>
</feature>
<feature type="sequence variant" id="VAR_012484" description="In MODY3; dbSNP:rs587780357." evidence="11">
    <original>R</original>
    <variation>H</variation>
    <location>
        <position position="203"/>
    </location>
</feature>
<feature type="sequence variant" id="VAR_010555" description="In MODY3; uncertain significance; reduces transcription activation by about 50%; dbSNP:rs2135839309." evidence="14 29">
    <original>K</original>
    <variation>Q</variation>
    <location>
        <position position="205"/>
    </location>
</feature>
<feature type="sequence variant" id="VAR_033090" description="In a hepatic adenoma sample; somatic mutation; dbSNP:rs2135839338." evidence="13">
    <original>W</original>
    <variation>C</variation>
    <location>
        <position position="206"/>
    </location>
</feature>
<feature type="sequence variant" id="VAR_033091" description="In a hepatic adenoma sample; somatic mutation; dbSNP:rs2135839334." evidence="13">
    <original>W</original>
    <variation>L</variation>
    <location>
        <position position="206"/>
    </location>
</feature>
<feature type="sequence variant" id="VAR_010556" description="In MODY3; dbSNP:rs1057520779." evidence="22">
    <original>R</original>
    <variation>Q</variation>
    <location>
        <position position="229"/>
    </location>
</feature>
<feature type="sequence variant" id="VAR_033092" description="In a hepatic multiple adenoma sample; somatic mutation; dbSNP:rs1555211935." evidence="13">
    <original>N</original>
    <variation>S</variation>
    <location>
        <position position="237"/>
    </location>
</feature>
<feature type="sequence variant" id="VAR_010557" description="In T1D20 and MODY3; dbSNP:rs2135841104." evidence="22 37">
    <original>C</original>
    <variation>G</variation>
    <location>
        <position position="241"/>
    </location>
</feature>
<feature type="sequence variant" id="VAR_033093" description="In a hepatic adenoma sample; somatic mutation." evidence="13">
    <original>R</original>
    <variation>G</variation>
    <location>
        <position position="244"/>
    </location>
</feature>
<feature type="sequence variant" id="VAR_033094" description="In a hepatocellular carcinoma sample; somatic mutation; dbSNP:rs1555211982." evidence="13">
    <original>Q</original>
    <variation>P</variation>
    <location>
        <position position="250"/>
    </location>
</feature>
<feature type="sequence variant" id="VAR_010558" description="Found in patients with late-onset NIDDM; uncertain significance; low penetrance; dbSNP:rs2135841451." evidence="30">
    <original>L</original>
    <variation>M</variation>
    <location>
        <position position="254"/>
    </location>
</feature>
<feature type="sequence variant" id="VAR_010559" description="In MODY3; uncertain significance; dbSNP:rs2135841558." evidence="32">
    <original>V</original>
    <variation>D</variation>
    <location>
        <position position="259"/>
    </location>
</feature>
<feature type="sequence variant" id="VAR_010560" description="In MODY3; dbSNP:rs886039544." evidence="28">
    <original>T</original>
    <variation>M</variation>
    <location>
        <position position="260"/>
    </location>
</feature>
<feature type="sequence variant" id="VAR_010561" description="In MODY3; dbSNP:rs771108132." evidence="29">
    <original>R</original>
    <variation>C</variation>
    <location>
        <position position="263"/>
    </location>
</feature>
<feature type="sequence variant" id="VAR_033095" description="In a hepatic adenoma sample; somatic mutation; dbSNP:rs193922605." evidence="13">
    <original>F</original>
    <variation>C</variation>
    <location>
        <position position="268"/>
    </location>
</feature>
<feature type="sequence variant" id="VAR_079479" description="In MODY3; dbSNP:rs886039386." evidence="19">
    <original>R</original>
    <variation>G</variation>
    <location>
        <position position="271"/>
    </location>
</feature>
<feature type="sequence variant" id="VAR_010562" description="In MODY3; dbSNP:rs886039386." evidence="36">
    <original>R</original>
    <variation>W</variation>
    <location>
        <position position="271"/>
    </location>
</feature>
<feature type="sequence variant" id="VAR_010563" description="In NIDDM; loss of function in positive regulation of DNA-templated transcription; dbSNP:rs1555212014." evidence="9">
    <original>R</original>
    <variation>C</variation>
    <location>
        <position position="272"/>
    </location>
</feature>
<feature type="sequence variant" id="VAR_003759" description="In T1D20 and MODY3; dbSNP:rs137853238." evidence="22 28 31">
    <original>R</original>
    <variation>H</variation>
    <location>
        <position position="272"/>
    </location>
</feature>
<feature type="sequence variant" id="VAR_033096" description="In a hepatic adenoma sample; somatic mutation." evidence="13 17">
    <original>K</original>
    <variation>E</variation>
    <location>
        <position position="273"/>
    </location>
</feature>
<feature type="sequence variant" id="VAR_010564" description="Strong association with NIDDM susceptibility; unique to the Canadian Oji-Cree population; dbSNP:rs137853240." evidence="7">
    <original>G</original>
    <variation>S</variation>
    <location>
        <position position="319"/>
    </location>
</feature>
<feature type="sequence variant" id="VAR_010565" description="In T1D20; decreased function in positive regulation of DNA-templated transcription; dbSNP:rs368683806." evidence="9">
    <original>G</original>
    <variation>R</variation>
    <location>
        <position position="415"/>
    </location>
</feature>
<feature type="sequence variant" id="VAR_012485" description="In MODY3; uncertain significance; dbSNP:rs1224145094." evidence="11">
    <original>S</original>
    <variation>C</variation>
    <location>
        <position position="432"/>
    </location>
</feature>
<feature type="sequence variant" id="VAR_003760" description="In MODY3; dbSNP:rs137853236." evidence="19 21 24">
    <original>P</original>
    <variation>L</variation>
    <location>
        <position position="447"/>
    </location>
</feature>
<feature type="sequence variant" id="VAR_007906" description="In dbSNP:rs2464196." evidence="26 27 30 33 34 38">
    <original>S</original>
    <variation>N</variation>
    <location>
        <position position="487"/>
    </location>
</feature>
<feature type="sequence variant" id="VAR_010566" description="In dbSNP:rs202039659." evidence="33">
    <original>H</original>
    <variation>R</variation>
    <location>
        <position position="514"/>
    </location>
</feature>
<feature type="sequence variant" id="VAR_010567" description="In MODY3; dbSNP:rs749673816." evidence="23">
    <original>P</original>
    <variation>L</variation>
    <location>
        <position position="519"/>
    </location>
</feature>
<feature type="sequence variant" id="VAR_010568" description="In MODY3; incomplete penetrance; dbSNP:rs372624970." evidence="35">
    <original>T</original>
    <variation>R</variation>
    <location>
        <position position="537"/>
    </location>
</feature>
<feature type="sequence variant" id="VAR_010569" description="In dbSNP:rs1169305." evidence="16 18 21 38 39">
    <original>S</original>
    <variation>G</variation>
    <location>
        <position position="574"/>
    </location>
</feature>
<feature type="sequence variant" id="VAR_003761" description="In T1D20; uncertain significance; dbSNP:rs137853239." evidence="31">
    <original>R</original>
    <variation>G</variation>
    <location>
        <position position="583"/>
    </location>
</feature>
<feature type="sequence variant" id="VAR_010570" description="In late-onset NIDDM; uncertain significance; also in an individual with hepatic hyperplasia and familial early-onset diabetes; dbSNP:rs137853242." evidence="13 26">
    <original>R</original>
    <variation>Q</variation>
    <location>
        <position position="583"/>
    </location>
</feature>
<feature type="sequence variant" id="VAR_010571" description="In MODY3; pathogenic; dbSNP:rs2135854451." evidence="32">
    <original>S</original>
    <variation>I</variation>
    <location>
        <position position="594"/>
    </location>
</feature>
<feature type="sequence variant" id="VAR_012486" description="In MODY3; uncertain significance; dbSNP:rs193922591." evidence="11">
    <original>I</original>
    <variation>M</variation>
    <location>
        <position position="618"/>
    </location>
</feature>
<feature type="sequence variant" id="VAR_010572" description="In MODY3; uncertain significance; dbSNP:rs1316999782." evidence="35">
    <original>E</original>
    <variation>K</variation>
    <location>
        <position position="619"/>
    </location>
</feature>
<feature type="sequence variant" id="VAR_010573" description="In MODY3; uncertain significance; incomplete penetrance; dbSNP:rs137853241." evidence="10 23">
    <original>T</original>
    <variation>I</variation>
    <location>
        <position position="620"/>
    </location>
</feature>
<feature type="mutagenesis site" description="Strong loss of SPOP-mediated ubiquitination." evidence="20">
    <original>K</original>
    <variation>R</variation>
    <location>
        <position position="117"/>
    </location>
</feature>
<feature type="mutagenesis site" description="Abolishes transcription activation." evidence="14">
    <original>N</original>
    <variation>W</variation>
    <location>
        <position position="127"/>
    </location>
</feature>
<feature type="mutagenesis site" description="Abolishes transcription activation." evidence="14">
    <original>E</original>
    <variation>K</variation>
    <location>
        <position position="132"/>
    </location>
</feature>
<feature type="mutagenesis site" description="No significant effect on transcription activation." evidence="14">
    <original>F</original>
    <variation>S</variation>
    <location>
        <position position="177"/>
    </location>
</feature>
<feature type="mutagenesis site" description="No effect on transcription activation." evidence="14">
    <original>I</original>
    <variation>Q</variation>
    <location>
        <position position="186"/>
    </location>
</feature>
<feature type="mutagenesis site" description="No effect on transcription activation." evidence="14">
    <original>T</original>
    <variation>Q</variation>
    <location>
        <position position="190"/>
    </location>
</feature>
<feature type="mutagenesis site" description="Reduces transcription activation by 70%." evidence="14">
    <original>N</original>
    <variation>D</variation>
    <location>
        <position position="202"/>
    </location>
</feature>
<feature type="mutagenesis site" description="Reduces transcription activation by 75%." evidence="14">
    <original>V</original>
    <variation>D</variation>
    <location>
        <position position="246"/>
    </location>
</feature>
<feature type="mutagenesis site" description="Reduces transcription activation by 70%." evidence="14">
    <original>N</original>
    <variation>W</variation>
    <location>
        <position position="257"/>
    </location>
</feature>
<feature type="helix" evidence="45">
    <location>
        <begin position="4"/>
        <end position="19"/>
    </location>
</feature>
<feature type="helix" evidence="45">
    <location>
        <begin position="23"/>
        <end position="30"/>
    </location>
</feature>
<feature type="helix" evidence="44">
    <location>
        <begin position="94"/>
        <end position="107"/>
    </location>
</feature>
<feature type="helix" evidence="44">
    <location>
        <begin position="112"/>
        <end position="125"/>
    </location>
</feature>
<feature type="helix" evidence="44">
    <location>
        <begin position="130"/>
        <end position="137"/>
    </location>
</feature>
<feature type="helix" evidence="44">
    <location>
        <begin position="141"/>
        <end position="149"/>
    </location>
</feature>
<feature type="helix" evidence="44">
    <location>
        <begin position="156"/>
        <end position="169"/>
    </location>
</feature>
<feature type="turn" evidence="44">
    <location>
        <begin position="170"/>
        <end position="173"/>
    </location>
</feature>
<feature type="helix" evidence="44">
    <location>
        <begin position="174"/>
        <end position="177"/>
    </location>
</feature>
<feature type="helix" evidence="44">
    <location>
        <begin position="208"/>
        <end position="221"/>
    </location>
</feature>
<feature type="turn" evidence="44">
    <location>
        <begin position="226"/>
        <end position="229"/>
    </location>
</feature>
<feature type="helix" evidence="44">
    <location>
        <begin position="230"/>
        <end position="243"/>
    </location>
</feature>
<feature type="helix" evidence="44">
    <location>
        <begin position="255"/>
        <end position="257"/>
    </location>
</feature>
<feature type="helix" evidence="44">
    <location>
        <begin position="261"/>
        <end position="274"/>
    </location>
</feature>
<feature type="sequence conflict" description="In Ref. 5; ADK56177." evidence="42" ref="5">
    <original>L</original>
    <variation>S</variation>
    <location sequence="P20823-7">
        <position position="551"/>
    </location>
</feature>
<comment type="function">
    <text evidence="1 12 14">Transcriptional activator that regulates the tissue specific expression of multiple genes, especially in pancreatic islet cells and in liver (By similarity). Binds to the inverted palindrome 5'-GTTAATNATTAAC-3' (PubMed:10966642, PubMed:12453420). Activates the transcription of CYP1A2, CYP2E1 and CYP3A11 (By similarity).</text>
</comment>
<comment type="function">
    <text evidence="15 20">(Microbial infection) Plays a crucial role for hepatitis B virus gene transcription and DNA replication. Mechanistically, synergistically cooperates with NR5A2 to up-regulate the activity of one of the critical cis-elements in the hepatitis B virus genome enhancer II (ENII).</text>
</comment>
<comment type="subunit">
    <text evidence="1 12 14 15 20">Binds DNA as a dimer (PubMed:12453420). Heterotetramer with PCBD1; formed by a dimer of dimers (By similarity). Interacts with PCBD1 (PubMed:10966642). Interacts with BHLHE41 (By similarity). Interacts with NR5A2 (PubMed:14728801). Interacts with SPOP; this interaction promotes ubiquitination and degradation of HNF1A (PubMed:38018242).</text>
</comment>
<comment type="interaction">
    <interactant intactId="EBI-636034">
        <id>P20823</id>
    </interactant>
    <interactant intactId="EBI-634187">
        <id>Q9Y463</id>
        <label>DYRK1B</label>
    </interactant>
    <organismsDiffer>false</organismsDiffer>
    <experiments>4</experiments>
</comment>
<comment type="interaction">
    <interactant intactId="EBI-636034">
        <id>P20823</id>
    </interactant>
    <interactant intactId="EBI-2798841">
        <id>P35680</id>
        <label>HNF1B</label>
    </interactant>
    <organismsDiffer>false</organismsDiffer>
    <experiments>2</experiments>
</comment>
<comment type="interaction">
    <interactant intactId="EBI-636034">
        <id>P20823</id>
    </interactant>
    <interactant intactId="EBI-740475">
        <id>P61457</id>
        <label>PCBD1</label>
    </interactant>
    <organismsDiffer>false</organismsDiffer>
    <experiments>3</experiments>
</comment>
<comment type="interaction">
    <interactant intactId="EBI-636034">
        <id>P20823</id>
    </interactant>
    <interactant intactId="EBI-3912635">
        <id>Q92786</id>
        <label>PROX1</label>
    </interactant>
    <organismsDiffer>false</organismsDiffer>
    <experiments>3</experiments>
</comment>
<comment type="subcellular location">
    <subcellularLocation>
        <location evidence="2 12 20">Nucleus</location>
    </subcellularLocation>
</comment>
<comment type="alternative products">
    <event type="alternative splicing"/>
    <isoform>
        <id>P20823-1</id>
        <name>A</name>
        <sequence type="displayed"/>
    </isoform>
    <isoform>
        <id>P20823-2</id>
        <name>B</name>
        <sequence type="described" ref="VSP_002250 VSP_002251"/>
    </isoform>
    <isoform>
        <id>P20823-3</id>
        <name>C</name>
        <sequence type="described" ref="VSP_002252 VSP_002253"/>
    </isoform>
    <isoform>
        <id>P20823-4</id>
        <name>4</name>
        <sequence type="described" ref="VSP_047736 VSP_047739"/>
    </isoform>
    <isoform>
        <id>P20823-5</id>
        <name>5</name>
        <sequence type="described" ref="VSP_047737 VSP_047738"/>
    </isoform>
    <isoform>
        <id>P20823-6</id>
        <name>6</name>
        <sequence type="described" ref="VSP_053324 VSP_053325 VSP_053326"/>
    </isoform>
    <isoform>
        <id>P20823-7</id>
        <name>7</name>
        <name>insIVS8</name>
        <sequence type="described" ref="VSP_054302"/>
    </isoform>
    <isoform>
        <id>P20823-8</id>
        <name>8</name>
        <name>delta 2</name>
        <sequence type="described" ref="VSP_054300 VSP_054301"/>
    </isoform>
</comment>
<comment type="tissue specificity">
    <text>Liver.</text>
</comment>
<comment type="PTM">
    <text evidence="20">Ubiquitinated in s SPOP-dependent manner; leading to prteasomal degradation.</text>
</comment>
<comment type="polymorphism">
    <text evidence="27">The Ala-98/Val-98 polymorphism is associated with a reduction in glucose-induced serum C-peptide and insulin responses.</text>
</comment>
<comment type="disease">
    <disease id="DI-02645">
        <name>Hepatic adenomas familial</name>
        <acronym>HEPAF</acronym>
        <description>Rare benign liver tumors of presumable epithelial origin that develop in an otherwise normal liver. Hepatic adenomas may be single or multiple. They consist of sheets of well-differentiated hepatocytes that contain fat and glycogen and can produce bile. Bile ducts or portal areas are absent. Kupffer cells, if present, are reduced in number and are non-functional. Conditions associated with adenomas are insulin-dependent diabetes mellitus and glycogen storage diseases (types 1 and 3).</description>
        <dbReference type="MIM" id="142330"/>
    </disease>
    <text>The disease is caused by variants affecting the gene represented in this entry. Bi-allelic inactivation of HNF1A, whether sporadic or associated with MODY3, may be an early step in the development of some hepatocellular carcinomas.</text>
</comment>
<comment type="disease" evidence="6 8 10 11 12 14 19 21 22 23 24 25 28 29 32 35 36">
    <disease id="DI-01945">
        <name>Maturity-onset diabetes of the young 3</name>
        <acronym>MODY3</acronym>
        <description>A form of diabetes that is characterized by an autosomal dominant mode of inheritance, onset in childhood or early adulthood (usually before 25 years of age), a primary defect in insulin secretion and frequent insulin-independence at the beginning of the disease.</description>
        <dbReference type="MIM" id="600496"/>
    </disease>
    <text>The disease is caused by variants affecting the gene represented in this entry.</text>
</comment>
<comment type="disease" evidence="9 31 37">
    <disease id="DI-02779">
        <name>Type 1 diabetes mellitus 20</name>
        <acronym>T1D20</acronym>
        <description>A multifactorial disorder of glucose homeostasis that is characterized by susceptibility to ketoacidosis in the absence of insulin therapy. Clinical features are polydipsia, polyphagia and polyuria which result from hyperglycemia-induced osmotic diuresis and secondary thirst. These derangements result in long-term complications that affect the eyes, kidneys, nerves, and blood vessels.</description>
        <dbReference type="MIM" id="612520"/>
    </disease>
    <text>Disease susceptibility is associated with variants affecting the gene represented in this entry.</text>
</comment>
<comment type="miscellaneous">
    <molecule>Isoform 7</molecule>
    <text evidence="42">Due to intron retention.</text>
</comment>
<comment type="similarity">
    <text evidence="42">Belongs to the HNF1 homeobox family.</text>
</comment>
<comment type="online information" name="Wikipedia">
    <link uri="https://en.wikipedia.org/wiki/Hepatocyte_nuclear_factors"/>
    <text>Hepatocyte nuclear factors entry</text>
</comment>
<name>HNF1A_HUMAN</name>
<reference key="1">
    <citation type="journal article" date="1990" name="Genomics">
        <title>Cloning of human hepatic nuclear factor 1 (HNF1) and chromosomal localization of its gene in man and mouse.</title>
        <authorList>
            <person name="Bach I."/>
            <person name="Galcheva-Gargova Z."/>
            <person name="Mattei M.-G."/>
            <person name="Simon-Chazottes D."/>
            <person name="Guenet J.-L."/>
            <person name="Cereghini S."/>
            <person name="Yaniv M."/>
        </authorList>
    </citation>
    <scope>NUCLEOTIDE SEQUENCE [MRNA] (ISOFORM A)</scope>
    <scope>VARIANT GLY-574</scope>
    <source>
        <tissue>Liver</tissue>
    </source>
</reference>
<reference key="2">
    <citation type="journal article" date="1993" name="EMBO J.">
        <title>More potent transcriptional activators or a transdominant inhibitor of the HNF1 homeoprotein family are generated by alternative RNA processing.</title>
        <authorList>
            <person name="Bach I."/>
            <person name="Yaniv M."/>
        </authorList>
    </citation>
    <scope>NUCLEOTIDE SEQUENCE [MRNA] (ISOFORM A)</scope>
    <scope>ALTERNATIVE SPLICING</scope>
    <source>
        <tissue>Liver</tissue>
    </source>
</reference>
<reference key="3">
    <citation type="journal article" date="1996" name="Nature">
        <title>Mutations in the hepatocyte nuclear factor-1alpha gene in maturity-onset diabetes of the young (MODY3).</title>
        <authorList>
            <person name="Yamagata K."/>
            <person name="Oda N."/>
            <person name="Kaisaki P.J."/>
            <person name="Menzel S."/>
            <person name="Furuta H."/>
            <person name="Vaxillaire M."/>
            <person name="Southam L."/>
            <person name="Cox R.D."/>
            <person name="Lathrop G.M."/>
            <person name="Boriraj V.V."/>
            <person name="Chen X."/>
            <person name="Cox N.J."/>
            <person name="Oda Y."/>
            <person name="Yano H."/>
            <person name="le Beau M.M."/>
            <person name="Yamada S."/>
            <person name="Nishigori H."/>
            <person name="Takeda J."/>
            <person name="Fajans S.S."/>
            <person name="Hattersley A.T."/>
            <person name="Iwasaki N."/>
            <person name="Hansen T."/>
            <person name="Pedersen O."/>
            <person name="Polonsky K.S."/>
            <person name="Turner R.C."/>
            <person name="Velho G."/>
            <person name="Chevre J.-C."/>
            <person name="Froguel P."/>
            <person name="Bell G.I."/>
        </authorList>
    </citation>
    <scope>NUCLEOTIDE SEQUENCE [GENOMIC DNA]</scope>
    <scope>VARIANT MODY3 LEU-447</scope>
    <scope>VARIANT GLY-574</scope>
</reference>
<reference key="4">
    <citation type="submission" date="2010-04" db="EMBL/GenBank/DDBJ databases">
        <title>Homo sapiens HNF1 alpha B mRNA splicing variants.</title>
        <authorList>
            <person name="Yang C.-W."/>
            <person name="Tsai D.-Y."/>
        </authorList>
    </citation>
    <scope>NUCLEOTIDE SEQUENCE [MRNA] (ISOFORMS 4; 5 AND 6)</scope>
</reference>
<reference key="5">
    <citation type="submission" date="2010-06" db="EMBL/GenBank/DDBJ databases">
        <title>New isoforms in HNF1A.</title>
        <authorList>
            <person name="Gonzalez Ruano E."/>
            <person name="Gonzalez Sarmiento R."/>
        </authorList>
    </citation>
    <scope>NUCLEOTIDE SEQUENCE [MRNA] (ISOFORM 7)</scope>
</reference>
<reference key="6">
    <citation type="submission" date="2007-05" db="EMBL/GenBank/DDBJ databases">
        <authorList>
            <consortium name="SeattleSNPs variation discovery resource"/>
        </authorList>
    </citation>
    <scope>NUCLEOTIDE SEQUENCE [GENOMIC DNA]</scope>
    <scope>VARIANTS LEU-27; VAL-98; ASN-487 AND GLY-574</scope>
</reference>
<reference key="7">
    <citation type="journal article" date="2006" name="Nature">
        <title>The finished DNA sequence of human chromosome 12.</title>
        <authorList>
            <person name="Scherer S.E."/>
            <person name="Muzny D.M."/>
            <person name="Buhay C.J."/>
            <person name="Chen R."/>
            <person name="Cree A."/>
            <person name="Ding Y."/>
            <person name="Dugan-Rocha S."/>
            <person name="Gill R."/>
            <person name="Gunaratne P."/>
            <person name="Harris R.A."/>
            <person name="Hawes A.C."/>
            <person name="Hernandez J."/>
            <person name="Hodgson A.V."/>
            <person name="Hume J."/>
            <person name="Jackson A."/>
            <person name="Khan Z.M."/>
            <person name="Kovar-Smith C."/>
            <person name="Lewis L.R."/>
            <person name="Lozado R.J."/>
            <person name="Metzker M.L."/>
            <person name="Milosavljevic A."/>
            <person name="Miner G.R."/>
            <person name="Montgomery K.T."/>
            <person name="Morgan M.B."/>
            <person name="Nazareth L.V."/>
            <person name="Scott G."/>
            <person name="Sodergren E."/>
            <person name="Song X.-Z."/>
            <person name="Steffen D."/>
            <person name="Lovering R.C."/>
            <person name="Wheeler D.A."/>
            <person name="Worley K.C."/>
            <person name="Yuan Y."/>
            <person name="Zhang Z."/>
            <person name="Adams C.Q."/>
            <person name="Ansari-Lari M.A."/>
            <person name="Ayele M."/>
            <person name="Brown M.J."/>
            <person name="Chen G."/>
            <person name="Chen Z."/>
            <person name="Clerc-Blankenburg K.P."/>
            <person name="Davis C."/>
            <person name="Delgado O."/>
            <person name="Dinh H.H."/>
            <person name="Draper H."/>
            <person name="Gonzalez-Garay M.L."/>
            <person name="Havlak P."/>
            <person name="Jackson L.R."/>
            <person name="Jacob L.S."/>
            <person name="Kelly S.H."/>
            <person name="Li L."/>
            <person name="Li Z."/>
            <person name="Liu J."/>
            <person name="Liu W."/>
            <person name="Lu J."/>
            <person name="Maheshwari M."/>
            <person name="Nguyen B.-V."/>
            <person name="Okwuonu G.O."/>
            <person name="Pasternak S."/>
            <person name="Perez L.M."/>
            <person name="Plopper F.J.H."/>
            <person name="Santibanez J."/>
            <person name="Shen H."/>
            <person name="Tabor P.E."/>
            <person name="Verduzco D."/>
            <person name="Waldron L."/>
            <person name="Wang Q."/>
            <person name="Williams G.A."/>
            <person name="Zhang J."/>
            <person name="Zhou J."/>
            <person name="Allen C.C."/>
            <person name="Amin A.G."/>
            <person name="Anyalebechi V."/>
            <person name="Bailey M."/>
            <person name="Barbaria J.A."/>
            <person name="Bimage K.E."/>
            <person name="Bryant N.P."/>
            <person name="Burch P.E."/>
            <person name="Burkett C.E."/>
            <person name="Burrell K.L."/>
            <person name="Calderon E."/>
            <person name="Cardenas V."/>
            <person name="Carter K."/>
            <person name="Casias K."/>
            <person name="Cavazos I."/>
            <person name="Cavazos S.R."/>
            <person name="Ceasar H."/>
            <person name="Chacko J."/>
            <person name="Chan S.N."/>
            <person name="Chavez D."/>
            <person name="Christopoulos C."/>
            <person name="Chu J."/>
            <person name="Cockrell R."/>
            <person name="Cox C.D."/>
            <person name="Dang M."/>
            <person name="Dathorne S.R."/>
            <person name="David R."/>
            <person name="Davis C.M."/>
            <person name="Davy-Carroll L."/>
            <person name="Deshazo D.R."/>
            <person name="Donlin J.E."/>
            <person name="D'Souza L."/>
            <person name="Eaves K.A."/>
            <person name="Egan A."/>
            <person name="Emery-Cohen A.J."/>
            <person name="Escotto M."/>
            <person name="Flagg N."/>
            <person name="Forbes L.D."/>
            <person name="Gabisi A.M."/>
            <person name="Garza M."/>
            <person name="Hamilton C."/>
            <person name="Henderson N."/>
            <person name="Hernandez O."/>
            <person name="Hines S."/>
            <person name="Hogues M.E."/>
            <person name="Huang M."/>
            <person name="Idlebird D.G."/>
            <person name="Johnson R."/>
            <person name="Jolivet A."/>
            <person name="Jones S."/>
            <person name="Kagan R."/>
            <person name="King L.M."/>
            <person name="Leal B."/>
            <person name="Lebow H."/>
            <person name="Lee S."/>
            <person name="LeVan J.M."/>
            <person name="Lewis L.C."/>
            <person name="London P."/>
            <person name="Lorensuhewa L.M."/>
            <person name="Loulseged H."/>
            <person name="Lovett D.A."/>
            <person name="Lucier A."/>
            <person name="Lucier R.L."/>
            <person name="Ma J."/>
            <person name="Madu R.C."/>
            <person name="Mapua P."/>
            <person name="Martindale A.D."/>
            <person name="Martinez E."/>
            <person name="Massey E."/>
            <person name="Mawhiney S."/>
            <person name="Meador M.G."/>
            <person name="Mendez S."/>
            <person name="Mercado C."/>
            <person name="Mercado I.C."/>
            <person name="Merritt C.E."/>
            <person name="Miner Z.L."/>
            <person name="Minja E."/>
            <person name="Mitchell T."/>
            <person name="Mohabbat F."/>
            <person name="Mohabbat K."/>
            <person name="Montgomery B."/>
            <person name="Moore N."/>
            <person name="Morris S."/>
            <person name="Munidasa M."/>
            <person name="Ngo R.N."/>
            <person name="Nguyen N.B."/>
            <person name="Nickerson E."/>
            <person name="Nwaokelemeh O.O."/>
            <person name="Nwokenkwo S."/>
            <person name="Obregon M."/>
            <person name="Oguh M."/>
            <person name="Oragunye N."/>
            <person name="Oviedo R.J."/>
            <person name="Parish B.J."/>
            <person name="Parker D.N."/>
            <person name="Parrish J."/>
            <person name="Parks K.L."/>
            <person name="Paul H.A."/>
            <person name="Payton B.A."/>
            <person name="Perez A."/>
            <person name="Perrin W."/>
            <person name="Pickens A."/>
            <person name="Primus E.L."/>
            <person name="Pu L.-L."/>
            <person name="Puazo M."/>
            <person name="Quiles M.M."/>
            <person name="Quiroz J.B."/>
            <person name="Rabata D."/>
            <person name="Reeves K."/>
            <person name="Ruiz S.J."/>
            <person name="Shao H."/>
            <person name="Sisson I."/>
            <person name="Sonaike T."/>
            <person name="Sorelle R.P."/>
            <person name="Sutton A.E."/>
            <person name="Svatek A.F."/>
            <person name="Svetz L.A."/>
            <person name="Tamerisa K.S."/>
            <person name="Taylor T.R."/>
            <person name="Teague B."/>
            <person name="Thomas N."/>
            <person name="Thorn R.D."/>
            <person name="Trejos Z.Y."/>
            <person name="Trevino B.K."/>
            <person name="Ukegbu O.N."/>
            <person name="Urban J.B."/>
            <person name="Vasquez L.I."/>
            <person name="Vera V.A."/>
            <person name="Villasana D.M."/>
            <person name="Wang L."/>
            <person name="Ward-Moore S."/>
            <person name="Warren J.T."/>
            <person name="Wei X."/>
            <person name="White F."/>
            <person name="Williamson A.L."/>
            <person name="Wleczyk R."/>
            <person name="Wooden H.S."/>
            <person name="Wooden S.H."/>
            <person name="Yen J."/>
            <person name="Yoon L."/>
            <person name="Yoon V."/>
            <person name="Zorrilla S.E."/>
            <person name="Nelson D."/>
            <person name="Kucherlapati R."/>
            <person name="Weinstock G."/>
            <person name="Gibbs R.A."/>
        </authorList>
    </citation>
    <scope>NUCLEOTIDE SEQUENCE [LARGE SCALE GENOMIC DNA]</scope>
</reference>
<reference key="8">
    <citation type="submission" date="2005-07" db="EMBL/GenBank/DDBJ databases">
        <authorList>
            <person name="Mural R.J."/>
            <person name="Istrail S."/>
            <person name="Sutton G.G."/>
            <person name="Florea L."/>
            <person name="Halpern A.L."/>
            <person name="Mobarry C.M."/>
            <person name="Lippert R."/>
            <person name="Walenz B."/>
            <person name="Shatkay H."/>
            <person name="Dew I."/>
            <person name="Miller J.R."/>
            <person name="Flanigan M.J."/>
            <person name="Edwards N.J."/>
            <person name="Bolanos R."/>
            <person name="Fasulo D."/>
            <person name="Halldorsson B.V."/>
            <person name="Hannenhalli S."/>
            <person name="Turner R."/>
            <person name="Yooseph S."/>
            <person name="Lu F."/>
            <person name="Nusskern D.R."/>
            <person name="Shue B.C."/>
            <person name="Zheng X.H."/>
            <person name="Zhong F."/>
            <person name="Delcher A.L."/>
            <person name="Huson D.H."/>
            <person name="Kravitz S.A."/>
            <person name="Mouchard L."/>
            <person name="Reinert K."/>
            <person name="Remington K.A."/>
            <person name="Clark A.G."/>
            <person name="Waterman M.S."/>
            <person name="Eichler E.E."/>
            <person name="Adams M.D."/>
            <person name="Hunkapiller M.W."/>
            <person name="Myers E.W."/>
            <person name="Venter J.C."/>
        </authorList>
    </citation>
    <scope>NUCLEOTIDE SEQUENCE [LARGE SCALE GENOMIC DNA]</scope>
    <scope>VARIANT GLY-574</scope>
</reference>
<reference key="9">
    <citation type="journal article" date="2004" name="Genome Res.">
        <title>The status, quality, and expansion of the NIH full-length cDNA project: the Mammalian Gene Collection (MGC).</title>
        <authorList>
            <consortium name="The MGC Project Team"/>
        </authorList>
    </citation>
    <scope>NUCLEOTIDE SEQUENCE [LARGE SCALE MRNA]</scope>
    <scope>VARIANTS LEU-27 AND GLY-574</scope>
    <source>
        <tissue>Liver</tissue>
    </source>
</reference>
<reference key="10">
    <citation type="journal article" date="2003" name="Cell Res.">
        <title>LRH-1/hB1F and HNF1 synergistically up-regulate hepatitis B virus gene transcription and DNA replication.</title>
        <authorList>
            <person name="Cai Y.N."/>
            <person name="Zhou Q."/>
            <person name="Kong Y.Y."/>
            <person name="Li M."/>
            <person name="Viollet B."/>
            <person name="Xie Y.H."/>
            <person name="Wang Y."/>
        </authorList>
    </citation>
    <scope>FUNCTION (MICROBIAL INFECTION)</scope>
    <scope>INTERACTION WITH NR5A2</scope>
</reference>
<reference key="11">
    <citation type="journal article" date="2014" name="J. Proteomics">
        <title>An enzyme assisted RP-RPLC approach for in-depth analysis of human liver phosphoproteome.</title>
        <authorList>
            <person name="Bian Y."/>
            <person name="Song C."/>
            <person name="Cheng K."/>
            <person name="Dong M."/>
            <person name="Wang F."/>
            <person name="Huang J."/>
            <person name="Sun D."/>
            <person name="Wang L."/>
            <person name="Ye M."/>
            <person name="Zou H."/>
        </authorList>
    </citation>
    <scope>PHOSPHORYLATION [LARGE SCALE ANALYSIS] AT SER-93 AND SER-247</scope>
    <scope>IDENTIFICATION BY MASS SPECTROMETRY [LARGE SCALE ANALYSIS]</scope>
    <source>
        <tissue>Liver</tissue>
    </source>
</reference>
<reference key="12">
    <citation type="journal article" date="2023" name="J. Med. Virol.">
        <title>SPOP inhibits HBV transcription and replication by ubiquitination and degradation of HNF1alpha.</title>
        <authorList>
            <person name="Pi Y."/>
            <person name="Li Y."/>
            <person name="Yan Q."/>
            <person name="Luo H."/>
            <person name="Zhou P."/>
            <person name="Chang W."/>
            <person name="Gong D."/>
            <person name="Hu Y."/>
            <person name="Wang K."/>
            <person name="Tang N."/>
            <person name="Huang A."/>
            <person name="Chen Y."/>
        </authorList>
    </citation>
    <scope>FUNCTION (MICROBIAL INFECTION)</scope>
    <scope>INTERACTION WITH SPOP</scope>
    <scope>SUBCELLULAR LOCATION</scope>
    <scope>UBIQUITINATION</scope>
    <scope>MUTAGENESIS OF LYS-117</scope>
</reference>
<reference key="13">
    <citation type="journal article" date="2002" name="Mol. Cell">
        <title>Diabetes mutations delineate an atypical POU domain in HNF-1alpha.</title>
        <authorList>
            <person name="Chi Y.I."/>
            <person name="Frantz J.D."/>
            <person name="Oh B.C."/>
            <person name="Hansen L."/>
            <person name="Dhe-Paganon S."/>
            <person name="Shoelson S.E."/>
        </authorList>
    </citation>
    <scope>X-RAY CRYSTALLOGRAPHY (2.6 ANGSTROMS) OF 85-278 IN COMPLEX WITH DNA</scope>
    <scope>FUNCTION</scope>
    <scope>DNA-BINDING</scope>
    <scope>MUTAGENESIS OF ASN-127; GLU-132; PHE-177; ILE-186; THR-190; ASN-202; VAL-246 AND ASN-257</scope>
    <scope>CHARACTERIZATION OF VARIANTS MODY3 PHE-142 AND GLN-205</scope>
</reference>
<reference key="14">
    <citation type="journal article" date="2006" name="J. Mol. Biol.">
        <title>Diabetes mellitus due to misfolding of a beta-cell transcription factor: stereospecific frustration of a Schellman motif in HNF-1alpha.</title>
        <authorList>
            <person name="Narayana N."/>
            <person name="Phillips N.B."/>
            <person name="Hua Q.X."/>
            <person name="Jia W."/>
            <person name="Weiss M.A."/>
        </authorList>
    </citation>
    <scope>X-RAY CRYSTALLOGRAPHY (1.4 ANGSTROMS) OF 2-32</scope>
    <scope>CIRCULAR DICHROISM</scope>
</reference>
<reference key="15">
    <citation type="journal article" date="1997" name="Diabetes">
        <title>Novel mutations and a mutational hotspot in the MODY3 gene.</title>
        <authorList>
            <person name="Glucksmann M.A."/>
            <person name="Lehto M."/>
            <person name="Tayber O."/>
            <person name="Scotti S."/>
            <person name="Berkemeier L."/>
            <person name="Pulido J.C."/>
            <person name="Wu Y."/>
            <person name="Nir W.-J."/>
            <person name="Fang L."/>
            <person name="Markel P."/>
            <person name="Munnelly K.D."/>
            <person name="Goranson J."/>
            <person name="Orho M."/>
            <person name="Young B.M."/>
            <person name="Whitacre J.L."/>
            <person name="McMenimen C."/>
            <person name="Wantman M."/>
            <person name="Tuomi T."/>
            <person name="Warram J."/>
            <person name="Forsblom C.M."/>
            <person name="Carlsson M."/>
            <person name="Rosenzweig J."/>
            <person name="Kennedy G."/>
            <person name="Duyk G.M."/>
            <person name="Krolewski A.S."/>
            <person name="Groop L.C."/>
            <person name="Thomas J.D."/>
        </authorList>
    </citation>
    <scope>VARIANTS MODY3 ARG-107; TRP-131; MET-260 AND HIS-272</scope>
</reference>
<reference key="16">
    <citation type="journal article" date="1997" name="Diabetes">
        <title>Mutations in the hepatocyte nuclear factor-1alpha/MODY3 gene in Japanese subjects with early- and late-onset NIDDM.</title>
        <authorList>
            <person name="Iwasaki N."/>
            <person name="Oda N."/>
            <person name="Ogata M."/>
            <person name="Hara M."/>
            <person name="Hinokio Y."/>
            <person name="Oda Y."/>
            <person name="Yamagata K."/>
            <person name="Kanematsu S."/>
            <person name="Ohgawara H."/>
            <person name="Omori Y."/>
            <person name="Bell G.I."/>
        </authorList>
    </citation>
    <scope>VARIANTS MODY3 HIS-12; GLN-131; GLN-205 AND CYS-263</scope>
    <scope>VARIANT NIDDM ASP-191</scope>
</reference>
<reference key="17">
    <citation type="journal article" date="1997" name="Diabetes">
        <title>Mutations in the hepatocyte nuclear factor-1alpha gene (MODY3) are not a major cause of late-onset NIDDM in Japanese subjects.</title>
        <authorList>
            <person name="Yamada S."/>
            <person name="Nishigori H."/>
            <person name="Onda H."/>
            <person name="Takahashi K."/>
            <person name="Kitano N."/>
            <person name="Morikawa A."/>
            <person name="Takeuchi T."/>
            <person name="Takeda J."/>
        </authorList>
    </citation>
    <scope>VARIANTS LEU-27; MET-254 AND ASN-487</scope>
</reference>
<reference key="18">
    <citation type="journal article" date="1997" name="Diabetes">
        <title>Identification of mutations in the hepatocyte nuclear factor (HNF)-1-alpha gene in Japanese subjects with IDDM.</title>
        <authorList>
            <person name="Yamada S."/>
            <person name="Nishigori H."/>
            <person name="Onda H."/>
            <person name="Utsugi T."/>
            <person name="Yanagawa T."/>
            <person name="Maruyama T."/>
            <person name="Onigata K."/>
            <person name="Nagashima K."/>
            <person name="Nagai R."/>
            <person name="Morikawa A."/>
            <person name="Takeuchi T."/>
            <person name="Takeda J."/>
        </authorList>
    </citation>
    <scope>VARIANTS T1D20 HIS-272 AND GLY-583</scope>
</reference>
<reference key="19">
    <citation type="journal article" date="1997" name="Diabetes">
        <title>An automated fluorescent single-strand conformation polymorphism technique for screening mutations in the hepatocyte nuclear factor-1alpha gene (maturity-onset diabetes of the young).</title>
        <authorList>
            <person name="Boutin P."/>
            <person name="Chevre J.-C."/>
            <person name="Hani E.H."/>
            <person name="Gomis R."/>
            <person name="Pardini V.C."/>
            <person name="Guillausseau P.-J."/>
            <person name="Vaxillaire M."/>
            <person name="Velho G."/>
            <person name="Froguel P."/>
        </authorList>
    </citation>
    <scope>VARIANTS MODY3 ASP-259 AND ILE-594</scope>
</reference>
<reference key="20">
    <citation type="journal article" date="1997" name="Diabetes">
        <title>Mutations in the hepatocyte nuclear factor-1alpha gene in MODY and early-onset NIDDM: evidence for a mutational hotspot in exon 4.</title>
        <authorList>
            <person name="Kaisaki P.J."/>
            <person name="Menzel S."/>
            <person name="Lindner T."/>
            <person name="Oda N."/>
            <person name="Rjasanowski I."/>
            <person name="Sahm J."/>
            <person name="Meincke G."/>
            <person name="Schulze J."/>
            <person name="Schmechel H."/>
            <person name="Petzold C."/>
            <person name="Ledermann H.M."/>
            <person name="Sachse G."/>
            <person name="Boriraj V.V."/>
            <person name="Menzel R."/>
            <person name="Kerner W."/>
            <person name="Turner R.C."/>
            <person name="Yamagata K."/>
            <person name="Bell G.I."/>
        </authorList>
    </citation>
    <scope>VARIANTS MODY3 GLN-131; GLN-229; GLY-241 AND HIS-272</scope>
</reference>
<reference key="21">
    <citation type="journal article" date="1997" name="Diabetes">
        <title>Mutations in the hepatocyte nuclear factor-1alpha gene are a common cause of maturity-onset diabetes of the young in the U.K.</title>
        <authorList>
            <person name="Frayling T.M."/>
            <person name="Bulman M.P."/>
            <person name="Ellard S."/>
            <person name="Appleton M."/>
            <person name="Dronsfield M.J."/>
            <person name="Mackie A.D."/>
            <person name="Baird J.D."/>
            <person name="Kaisaki P.J."/>
            <person name="Yamagata K."/>
            <person name="Bell G.I."/>
            <person name="Bain S.C."/>
            <person name="Hattersley A.T."/>
        </authorList>
    </citation>
    <scope>VARIANTS MODY3 THR-129; TRP-131; TRP-159; LEU-519 AND ILE-620</scope>
</reference>
<reference key="22">
    <citation type="journal article" date="1997" name="Diabetes">
        <title>Novel MODY3 mutations in the hepatocyte nuclear factor-1alpha gene: evidence for a hyperexcitability of pancreatic beta-cells to intravenous secretagogues in a glucose-tolerant carrier of a P447L mutation.</title>
        <authorList>
            <person name="Hansen T."/>
            <person name="Eiberg H."/>
            <person name="Rouard M."/>
            <person name="Vaxillaire M."/>
            <person name="Moeller A.M."/>
            <person name="Rasmussen S.K."/>
            <person name="Fridberg M."/>
            <person name="Urhammer S.A."/>
            <person name="Holst J.J."/>
            <person name="Almind K."/>
            <person name="Echwald S.M."/>
            <person name="Hansen L."/>
            <person name="Bell G.I."/>
            <person name="Pedersen O."/>
        </authorList>
    </citation>
    <scope>VARIANTS MODY3 ASN-128; TYR-143 AND LEU-447</scope>
</reference>
<reference key="23">
    <citation type="journal article" date="1997" name="Diabetes">
        <title>A prevalent amino acid polymorphism at codon 98 in the hepatocyte nuclear factor-1alpha gene is associated with reduced serum C-peptide and insulin responses to an oral glucose challenge.</title>
        <authorList>
            <person name="Urhammer S.A."/>
            <person name="Fridberg M."/>
            <person name="Hansen T."/>
            <person name="Rasmussen S.K."/>
            <person name="Moeller A.M."/>
            <person name="Clausen J.O."/>
            <person name="Pedersen O."/>
        </authorList>
    </citation>
    <scope>VARIANTS LEU-27; VAL-98 AND ASN-487</scope>
</reference>
<reference key="24">
    <citation type="journal article" date="1997" name="Diabetologia">
        <title>Genetic variation in the hepatocyte nuclear factor-1 alpha gene in Danish Caucasians with late-onset NIDDM.</title>
        <authorList>
            <person name="Urhammer S.A."/>
            <person name="Rasmussen S.K."/>
            <person name="Kaisaki P.J."/>
            <person name="Oda N."/>
            <person name="Yamagata K."/>
            <person name="Moeller A.M."/>
            <person name="Fridberg M."/>
            <person name="Hansen L."/>
            <person name="Hansen T."/>
            <person name="Bell G.I."/>
            <person name="Pedersen O."/>
        </authorList>
    </citation>
    <scope>VARIANT NIDDM GLN-583</scope>
    <scope>VARIANTS LEU-27; VAL-98 AND ASN-487</scope>
</reference>
<reference key="25">
    <citation type="journal article" date="1997" name="Hum. Mol. Genet.">
        <title>Identification of nine novel mutations in the hepatocyte nuclear factor 1 alpha gene associated with maturity-onset diabetes of the young (MODY3).</title>
        <authorList>
            <person name="Vaxillaire M."/>
            <person name="Rouard M."/>
            <person name="Yamagata K."/>
            <person name="Oda N."/>
            <person name="Kaisaki P.J."/>
            <person name="Boriraj V.V."/>
            <person name="Chevre J.-C."/>
            <person name="Boccio V."/>
            <person name="Cox R.D."/>
            <person name="Lathrop G.M."/>
            <person name="Dussoix P."/>
            <person name="Philippe J."/>
            <person name="Timsit J."/>
            <person name="Charpentier G."/>
            <person name="Velho G."/>
            <person name="Bell G.I."/>
            <person name="Froguel P."/>
        </authorList>
    </citation>
    <scope>VARIANTS MODY3 CYS-122; PHE-142 AND GLN-159</scope>
</reference>
<reference key="26">
    <citation type="journal article" date="1998" name="Diabetes">
        <title>Hepatocyte nuclear factor 1alpha coding mutations are an uncommon contributor to early-onset type 2 diabetes in Ashkenazi Jews.</title>
        <authorList>
            <person name="Behn P.S."/>
            <person name="Wasson J."/>
            <person name="Chayen S."/>
            <person name="Smolovitch I."/>
            <person name="Thomas J.D."/>
            <person name="Glaser B."/>
            <person name="Permutt M.A."/>
        </authorList>
    </citation>
    <scope>VARIANTS LEU-27; ASN-487 AND ARG-514</scope>
</reference>
<reference key="27">
    <citation type="journal article" date="1998" name="Diabetologia">
        <title>Mutation screening in 18 Caucasian families suggest the existence of other MODY genes.</title>
        <authorList>
            <person name="Chevre J.-C."/>
            <person name="Hani E.H."/>
            <person name="Boutin P."/>
            <person name="Vaxillaire M."/>
            <person name="Blanche H."/>
            <person name="Vionnet N."/>
            <person name="Pardini V.C."/>
            <person name="Timsit J."/>
            <person name="Larger E."/>
            <person name="Charpentier G."/>
            <person name="Beckers D."/>
            <person name="Maes M."/>
            <person name="Bellanne-Chantelot C."/>
            <person name="Velho G."/>
            <person name="Froguel P."/>
        </authorList>
    </citation>
    <scope>VARIANTS MODY3 ASP-31; TRP-159; THR-161; TRP-200 AND TRP-271</scope>
</reference>
<reference key="28">
    <citation type="journal article" date="1998" name="Diabetologia">
        <title>Mutations in the hepatocyte nuclear factor-1alpha gene in Caucasian families originally classified as having type I diabetes.</title>
        <authorList>
            <person name="Moeller A.M."/>
            <person name="Dalgaard L.T."/>
            <person name="Pociot F."/>
            <person name="Nerup J."/>
            <person name="Hansen T."/>
            <person name="Pedersen O."/>
        </authorList>
    </citation>
    <scope>VARIANTS T1D20 LYS-48 AND GLY-241</scope>
</reference>
<reference key="29">
    <citation type="journal article" date="1998" name="J. Clin. Endocrinol. Metab.">
        <title>Linkage and molecular scanning analyses of MODY3/hepatocyte nuclear factor-1 alpha gene in typical familial type 2 diabetes: evidence for novel mutations in exons 8 and 10.</title>
        <authorList>
            <person name="Elbein S.C."/>
            <person name="Teng K."/>
            <person name="Yount P."/>
            <person name="Scroggin E."/>
        </authorList>
    </citation>
    <scope>VARIANTS MODY3 ARG-537 AND LYS-619</scope>
</reference>
<reference key="30">
    <citation type="journal article" date="1998" name="J. Hum. Genet.">
        <title>Mutations in the hepatocyte nuclear factor-1 alpha gene 'MODY3' are not a major cause of early-onset non-insulin-dependent 'type 2' diabetes mellitus in Japanese.</title>
        <authorList>
            <person name="Nishigori H."/>
            <person name="Yamada S."/>
            <person name="Kohama T."/>
            <person name="Utsugi T."/>
            <person name="Shimizu H."/>
            <person name="Takeuchi T."/>
            <person name="Takeda J."/>
        </authorList>
    </citation>
    <scope>VARIANTS LEU-27 AND ASN-487</scope>
</reference>
<reference key="31">
    <citation type="journal article" date="1999" name="Diabetes">
        <title>Identification of mutations in the hepatocyte nuclear factor-1alpha gene in Japanese subjects with early-onset NIDDM and functional analysis of the mutant proteins.</title>
        <authorList>
            <person name="Yamada S."/>
            <person name="Tomura H."/>
            <person name="Nishigori H."/>
            <person name="Sho K."/>
            <person name="Mabe H."/>
            <person name="Iwatani N."/>
            <person name="Takumi T."/>
            <person name="Kito Y."/>
            <person name="Moriya N."/>
            <person name="Muroya K."/>
            <person name="Ogata T."/>
            <person name="Onigata K."/>
            <person name="Morikawa A."/>
            <person name="Inoue I."/>
            <person name="Takeda J."/>
        </authorList>
    </citation>
    <scope>VARIANTS MODY3 HIS-12; ASN-158; GLN-159 AND CYS-203</scope>
</reference>
<reference key="32">
    <citation type="journal article" date="1999" name="Diabetes">
        <title>Allelic drop-out in exon 2 of the hepatocyte nuclear factor-1alpha gene hinders the identification of mutations in three families with maturity-onset diabetes of the young.</title>
        <authorList>
            <person name="Ellard S."/>
            <person name="Bulman M.P."/>
            <person name="Frayling T.M."/>
            <person name="Allen L.I.S."/>
            <person name="Dronsfield M.J."/>
            <person name="Tack C.J."/>
            <person name="Hattersley A.T."/>
        </authorList>
    </citation>
    <scope>VARIANTS MODY3 GLU-117 AND TYR-143</scope>
</reference>
<reference key="33">
    <citation type="journal article" date="1999" name="Diabetologia">
        <title>Three new mutations in the hepatocyte nuclear factor-1alpha gene in Japanese subjects with diabetes mellitus: clinical features and functional characterization.</title>
        <authorList>
            <person name="Yoshiuchi I."/>
            <person name="Yamagata K."/>
            <person name="Yang Q."/>
            <person name="Iwahashi H."/>
            <person name="Okita K."/>
            <person name="Yamamoto K."/>
            <person name="Oue T."/>
            <person name="Imagawa A."/>
            <person name="Hamaguchi T."/>
            <person name="Yamasaki T."/>
            <person name="Horikawa Y."/>
            <person name="Satoh T."/>
            <person name="Nakajima H."/>
            <person name="Miyazaki J."/>
            <person name="Higashiyama S."/>
            <person name="Miyagawa J."/>
            <person name="Namba M."/>
            <person name="Hanafusa T."/>
            <person name="Matsuzawa Y."/>
        </authorList>
    </citation>
    <scope>VARIANT NIDDM CYS-272</scope>
    <scope>VARIANT T1D20 ARG-415</scope>
    <scope>CHARACTERIZATION OF VARIANT NIDDM CYS-272</scope>
    <scope>CHARACTERIZATION OF VARIANT T1D20 ARG-415</scope>
</reference>
<reference key="34">
    <citation type="journal article" date="1999" name="Diabet. Med.">
        <title>Molecular genetics of diabetes mellitus in Chinese subjects: identification of mutations in glucokinase and hepatocyte nuclear factor-1alpha genes in patients with early-onset type 2 diabetes mellitus/MODY.</title>
        <authorList>
            <person name="Ng M.C.Y."/>
            <person name="Cockburn B.N."/>
            <person name="Lindner T.H."/>
            <person name="Yeung V.T.F."/>
            <person name="Chow C.-C."/>
            <person name="So W.-Y."/>
            <person name="Li J.K.Y."/>
            <person name="Lo Y.M.D."/>
            <person name="Lee Z.S.K."/>
            <person name="Cockram C.S."/>
            <person name="Critchley J.A.J.H."/>
            <person name="Bell G.I."/>
            <person name="Chan J.C.N."/>
        </authorList>
    </citation>
    <scope>VARIANTS MODY3 ARG-20; HIS-203; CYS-432 AND MET-618</scope>
</reference>
<reference key="35">
    <citation type="journal article" date="1999" name="Eur. J. Hum. Genet.">
        <title>Non-penetrance in a MODY 3 family with a mutation in the hepatic nuclear factor 1alpha gene: implications for predictive testing.</title>
        <authorList>
            <person name="Miedzybrodzka Z."/>
            <person name="Hattersley A.T."/>
            <person name="Ellard S."/>
            <person name="Pearson D."/>
            <person name="de Silva D."/>
            <person name="Harvey R."/>
            <person name="Haites N."/>
        </authorList>
    </citation>
    <scope>VARIANT MODY3 ILE-620</scope>
</reference>
<reference key="36">
    <citation type="journal article" date="1999" name="J. Clin. Endocrinol. Metab.">
        <title>The hepatic nuclear factor-1alpha G319S variant is associated with early-onset type 2 diabetes in Canadian Oji-Cree.</title>
        <authorList>
            <person name="Hegele R.A."/>
            <person name="Cao H."/>
            <person name="Harris S.B."/>
            <person name="Hanley A.J.G."/>
            <person name="Zinman B."/>
        </authorList>
    </citation>
    <scope>VARIANT SER-319</scope>
</reference>
<reference key="37">
    <citation type="journal article" date="2000" name="Nat. Struct. Biol.">
        <title>Structural basis of dimerization, coactivator recognition and MODY3 mutations in HNF-1alpha.</title>
        <authorList>
            <person name="Rose R.B."/>
            <person name="Bayle J.H."/>
            <person name="Endrizzi J.A."/>
            <person name="Cronk J.D."/>
            <person name="Crabtree G.R."/>
            <person name="Alber T."/>
        </authorList>
    </citation>
    <scope>CHARACTERIZATION OF VARIANTS MODY3 HIS-12; ARG-20 AND ASP-31</scope>
    <scope>FUNCTION</scope>
    <scope>SUBCELLULAR LOCATION</scope>
    <scope>INTERACTION WITH PCBD1</scope>
</reference>
<reference key="38">
    <citation type="journal article" date="2002" name="Nat. Genet.">
        <title>Bi-allelic inactivation of TCF1 in hepatic adenomas.</title>
        <authorList>
            <person name="Bluteau O."/>
            <person name="Jeannot E."/>
            <person name="Bioulac-Sage P."/>
            <person name="Marques J.M."/>
            <person name="Blanc J.-F."/>
            <person name="Bui H."/>
            <person name="Beaudoin J.-C."/>
            <person name="Franco D."/>
            <person name="Balabaud C."/>
            <person name="Laurent-Puig P."/>
            <person name="Zucman-Rossi J."/>
        </authorList>
    </citation>
    <scope>INVOLVEMENT IN HEPATIC ADENOMAS</scope>
    <scope>VARIANTS TYR-127; CYS-165; CYS-206; LEU-206; SER-237; GLY-244; PRO-250; CYS-268; GLU-273 AND GLN-583</scope>
</reference>
<reference key="39">
    <citation type="journal article" date="2006" name="Science">
        <title>The consensus coding sequences of human breast and colorectal cancers.</title>
        <authorList>
            <person name="Sjoeblom T."/>
            <person name="Jones S."/>
            <person name="Wood L.D."/>
            <person name="Parsons D.W."/>
            <person name="Lin J."/>
            <person name="Barber T.D."/>
            <person name="Mandelker D."/>
            <person name="Leary R.J."/>
            <person name="Ptak J."/>
            <person name="Silliman N."/>
            <person name="Szabo S."/>
            <person name="Buckhaults P."/>
            <person name="Farrell C."/>
            <person name="Meeh P."/>
            <person name="Markowitz S.D."/>
            <person name="Willis J."/>
            <person name="Dawson D."/>
            <person name="Willson J.K.V."/>
            <person name="Gazdar A.F."/>
            <person name="Hartigan J."/>
            <person name="Wu L."/>
            <person name="Liu C."/>
            <person name="Parmigiani G."/>
            <person name="Park B.H."/>
            <person name="Bachman K.E."/>
            <person name="Papadopoulos N."/>
            <person name="Vogelstein B."/>
            <person name="Kinzler K.W."/>
            <person name="Velculescu V.E."/>
        </authorList>
    </citation>
    <scope>VARIANT [LARGE SCALE ANALYSIS] GLU-273</scope>
</reference>
<reference key="40">
    <citation type="journal article" date="2007" name="Clin. Endocrinol. (Oxf.)">
        <title>Mutations in GCK and HNF-1alpha explain the majority of cases with clinical diagnosis of MODY in Spain.</title>
        <authorList>
            <consortium name="Spanish MODY Group"/>
            <person name="Estalella I."/>
            <person name="Rica I."/>
            <person name="Perez de Nanclares G."/>
            <person name="Bilbao J.R."/>
            <person name="Vazquez J.A."/>
            <person name="San Pedro J.I."/>
            <person name="Busturia M.A."/>
            <person name="Castano L."/>
        </authorList>
    </citation>
    <scope>VARIANTS MODY3 ASP-31; MET-133; 171-ARG--GLN-631 DEL; GLY-271 AND LEU-447</scope>
</reference>
<evidence type="ECO:0000250" key="1">
    <source>
        <dbReference type="UniProtKB" id="P22361"/>
    </source>
</evidence>
<evidence type="ECO:0000255" key="2">
    <source>
        <dbReference type="PROSITE-ProRule" id="PRU00108"/>
    </source>
</evidence>
<evidence type="ECO:0000255" key="3">
    <source>
        <dbReference type="PROSITE-ProRule" id="PRU01285"/>
    </source>
</evidence>
<evidence type="ECO:0000255" key="4">
    <source>
        <dbReference type="PROSITE-ProRule" id="PRU01286"/>
    </source>
</evidence>
<evidence type="ECO:0000256" key="5">
    <source>
        <dbReference type="SAM" id="MobiDB-lite"/>
    </source>
</evidence>
<evidence type="ECO:0000269" key="6">
    <source>
    </source>
</evidence>
<evidence type="ECO:0000269" key="7">
    <source>
    </source>
</evidence>
<evidence type="ECO:0000269" key="8">
    <source>
    </source>
</evidence>
<evidence type="ECO:0000269" key="9">
    <source>
    </source>
</evidence>
<evidence type="ECO:0000269" key="10">
    <source>
    </source>
</evidence>
<evidence type="ECO:0000269" key="11">
    <source>
    </source>
</evidence>
<evidence type="ECO:0000269" key="12">
    <source>
    </source>
</evidence>
<evidence type="ECO:0000269" key="13">
    <source>
    </source>
</evidence>
<evidence type="ECO:0000269" key="14">
    <source>
    </source>
</evidence>
<evidence type="ECO:0000269" key="15">
    <source>
    </source>
</evidence>
<evidence type="ECO:0000269" key="16">
    <source>
    </source>
</evidence>
<evidence type="ECO:0000269" key="17">
    <source>
    </source>
</evidence>
<evidence type="ECO:0000269" key="18">
    <source>
    </source>
</evidence>
<evidence type="ECO:0000269" key="19">
    <source>
    </source>
</evidence>
<evidence type="ECO:0000269" key="20">
    <source>
    </source>
</evidence>
<evidence type="ECO:0000269" key="21">
    <source>
    </source>
</evidence>
<evidence type="ECO:0000269" key="22">
    <source>
    </source>
</evidence>
<evidence type="ECO:0000269" key="23">
    <source>
    </source>
</evidence>
<evidence type="ECO:0000269" key="24">
    <source>
    </source>
</evidence>
<evidence type="ECO:0000269" key="25">
    <source>
    </source>
</evidence>
<evidence type="ECO:0000269" key="26">
    <source>
    </source>
</evidence>
<evidence type="ECO:0000269" key="27">
    <source>
    </source>
</evidence>
<evidence type="ECO:0000269" key="28">
    <source>
    </source>
</evidence>
<evidence type="ECO:0000269" key="29">
    <source>
    </source>
</evidence>
<evidence type="ECO:0000269" key="30">
    <source>
    </source>
</evidence>
<evidence type="ECO:0000269" key="31">
    <source>
    </source>
</evidence>
<evidence type="ECO:0000269" key="32">
    <source>
    </source>
</evidence>
<evidence type="ECO:0000269" key="33">
    <source>
    </source>
</evidence>
<evidence type="ECO:0000269" key="34">
    <source>
    </source>
</evidence>
<evidence type="ECO:0000269" key="35">
    <source>
    </source>
</evidence>
<evidence type="ECO:0000269" key="36">
    <source>
    </source>
</evidence>
<evidence type="ECO:0000269" key="37">
    <source>
    </source>
</evidence>
<evidence type="ECO:0000269" key="38">
    <source ref="6"/>
</evidence>
<evidence type="ECO:0000269" key="39">
    <source ref="8"/>
</evidence>
<evidence type="ECO:0000303" key="40">
    <source ref="4"/>
</evidence>
<evidence type="ECO:0000303" key="41">
    <source ref="5"/>
</evidence>
<evidence type="ECO:0000305" key="42"/>
<evidence type="ECO:0007744" key="43">
    <source>
    </source>
</evidence>
<evidence type="ECO:0007829" key="44">
    <source>
        <dbReference type="PDB" id="1IC8"/>
    </source>
</evidence>
<evidence type="ECO:0007829" key="45">
    <source>
        <dbReference type="PDB" id="2GYP"/>
    </source>
</evidence>
<dbReference type="EMBL" id="M57732">
    <property type="protein sequence ID" value="AAA88077.1"/>
    <property type="molecule type" value="mRNA"/>
</dbReference>
<dbReference type="EMBL" id="X71346">
    <property type="protein sequence ID" value="CAB59201.1"/>
    <property type="molecule type" value="mRNA"/>
</dbReference>
<dbReference type="EMBL" id="U72618">
    <property type="protein sequence ID" value="AAC51137.1"/>
    <property type="molecule type" value="Genomic_DNA"/>
</dbReference>
<dbReference type="EMBL" id="U72612">
    <property type="protein sequence ID" value="AAC51137.1"/>
    <property type="status" value="JOINED"/>
    <property type="molecule type" value="Genomic_DNA"/>
</dbReference>
<dbReference type="EMBL" id="U72613">
    <property type="protein sequence ID" value="AAC51137.1"/>
    <property type="status" value="JOINED"/>
    <property type="molecule type" value="Genomic_DNA"/>
</dbReference>
<dbReference type="EMBL" id="U72614">
    <property type="protein sequence ID" value="AAC51137.1"/>
    <property type="status" value="JOINED"/>
    <property type="molecule type" value="Genomic_DNA"/>
</dbReference>
<dbReference type="EMBL" id="U72615">
    <property type="protein sequence ID" value="AAC51137.1"/>
    <property type="status" value="JOINED"/>
    <property type="molecule type" value="Genomic_DNA"/>
</dbReference>
<dbReference type="EMBL" id="U72616">
    <property type="protein sequence ID" value="AAC51137.1"/>
    <property type="status" value="JOINED"/>
    <property type="molecule type" value="Genomic_DNA"/>
</dbReference>
<dbReference type="EMBL" id="U72617">
    <property type="protein sequence ID" value="AAC51137.1"/>
    <property type="status" value="JOINED"/>
    <property type="molecule type" value="Genomic_DNA"/>
</dbReference>
<dbReference type="EMBL" id="HM116552">
    <property type="protein sequence ID" value="ADM43489.1"/>
    <property type="molecule type" value="mRNA"/>
</dbReference>
<dbReference type="EMBL" id="HM116557">
    <property type="protein sequence ID" value="ADM43494.1"/>
    <property type="molecule type" value="mRNA"/>
</dbReference>
<dbReference type="EMBL" id="HM116558">
    <property type="protein sequence ID" value="ADM43495.1"/>
    <property type="molecule type" value="mRNA"/>
</dbReference>
<dbReference type="EMBL" id="HM449088">
    <property type="protein sequence ID" value="ADK56177.1"/>
    <property type="molecule type" value="mRNA"/>
</dbReference>
<dbReference type="EMBL" id="HM449089">
    <property type="protein sequence ID" value="ADK56178.1"/>
    <property type="molecule type" value="mRNA"/>
</dbReference>
<dbReference type="EMBL" id="EF641294">
    <property type="protein sequence ID" value="ABR09270.1"/>
    <property type="molecule type" value="Genomic_DNA"/>
</dbReference>
<dbReference type="EMBL" id="AC079602">
    <property type="status" value="NOT_ANNOTATED_CDS"/>
    <property type="molecule type" value="Genomic_DNA"/>
</dbReference>
<dbReference type="EMBL" id="CH471054">
    <property type="protein sequence ID" value="EAW98226.1"/>
    <property type="molecule type" value="Genomic_DNA"/>
</dbReference>
<dbReference type="EMBL" id="BC104908">
    <property type="protein sequence ID" value="AAI04909.1"/>
    <property type="molecule type" value="mRNA"/>
</dbReference>
<dbReference type="EMBL" id="BC104910">
    <property type="protein sequence ID" value="AAI04911.1"/>
    <property type="molecule type" value="mRNA"/>
</dbReference>
<dbReference type="CCDS" id="CCDS9209.1">
    <molecule id="P20823-1"/>
</dbReference>
<dbReference type="PIR" id="A36749">
    <property type="entry name" value="A36749"/>
</dbReference>
<dbReference type="RefSeq" id="NP_000536.5">
    <molecule id="P20823-1"/>
    <property type="nucleotide sequence ID" value="NM_000545.6"/>
</dbReference>
<dbReference type="RefSeq" id="NP_001293108.1">
    <property type="nucleotide sequence ID" value="NM_001306179.1"/>
</dbReference>
<dbReference type="RefSeq" id="XP_024304936.1">
    <molecule id="P20823-7"/>
    <property type="nucleotide sequence ID" value="XM_024449168.2"/>
</dbReference>
<dbReference type="PDB" id="1IC8">
    <property type="method" value="X-ray"/>
    <property type="resolution" value="2.60 A"/>
    <property type="chains" value="A/B=85-278"/>
</dbReference>
<dbReference type="PDB" id="2GYP">
    <property type="method" value="X-ray"/>
    <property type="resolution" value="1.40 A"/>
    <property type="chains" value="A/B=2-32"/>
</dbReference>
<dbReference type="PDB" id="8PI7">
    <property type="method" value="X-ray"/>
    <property type="resolution" value="3.20 A"/>
    <property type="chains" value="A/B=83-279"/>
</dbReference>
<dbReference type="PDB" id="8PI8">
    <property type="method" value="X-ray"/>
    <property type="resolution" value="2.30 A"/>
    <property type="chains" value="A/B=83-279"/>
</dbReference>
<dbReference type="PDB" id="8PI9">
    <property type="method" value="X-ray"/>
    <property type="resolution" value="2.80 A"/>
    <property type="chains" value="A/B=83-279"/>
</dbReference>
<dbReference type="PDB" id="8PIA">
    <property type="method" value="X-ray"/>
    <property type="resolution" value="2.80 A"/>
    <property type="chains" value="A/B=83-279"/>
</dbReference>
<dbReference type="PDBsum" id="1IC8"/>
<dbReference type="PDBsum" id="2GYP"/>
<dbReference type="PDBsum" id="8PI7"/>
<dbReference type="PDBsum" id="8PI8"/>
<dbReference type="PDBsum" id="8PI9"/>
<dbReference type="PDBsum" id="8PIA"/>
<dbReference type="BMRB" id="P20823"/>
<dbReference type="PCDDB" id="P20823"/>
<dbReference type="SASBDB" id="P20823"/>
<dbReference type="SMR" id="P20823"/>
<dbReference type="BioGRID" id="112789">
    <property type="interactions" value="66"/>
</dbReference>
<dbReference type="DIP" id="DIP-33544N"/>
<dbReference type="FunCoup" id="P20823">
    <property type="interactions" value="725"/>
</dbReference>
<dbReference type="IntAct" id="P20823">
    <property type="interactions" value="33"/>
</dbReference>
<dbReference type="MINT" id="P20823"/>
<dbReference type="STRING" id="9606.ENSP00000438804"/>
<dbReference type="DrugBank" id="DB04419">
    <property type="generic name" value="D-norleucine"/>
</dbReference>
<dbReference type="DrugBank" id="DB15458">
    <property type="generic name" value="Norleucine"/>
</dbReference>
<dbReference type="GlyCosmos" id="P20823">
    <property type="glycosylation" value="15 sites, 1 glycan"/>
</dbReference>
<dbReference type="GlyGen" id="P20823">
    <property type="glycosylation" value="15 sites, 1 O-linked glycan (15 sites)"/>
</dbReference>
<dbReference type="iPTMnet" id="P20823"/>
<dbReference type="PhosphoSitePlus" id="P20823"/>
<dbReference type="BioMuta" id="HNF1A"/>
<dbReference type="DMDM" id="51338763"/>
<dbReference type="jPOST" id="P20823"/>
<dbReference type="MassIVE" id="P20823"/>
<dbReference type="PaxDb" id="9606-ENSP00000257555"/>
<dbReference type="PeptideAtlas" id="P20823"/>
<dbReference type="ProteomicsDB" id="15197"/>
<dbReference type="ProteomicsDB" id="15200"/>
<dbReference type="ProteomicsDB" id="15201"/>
<dbReference type="ProteomicsDB" id="15217"/>
<dbReference type="ProteomicsDB" id="26985"/>
<dbReference type="ProteomicsDB" id="53806">
    <molecule id="P20823-1"/>
</dbReference>
<dbReference type="ProteomicsDB" id="53807">
    <molecule id="P20823-2"/>
</dbReference>
<dbReference type="ProteomicsDB" id="53808">
    <molecule id="P20823-3"/>
</dbReference>
<dbReference type="Antibodypedia" id="4176">
    <property type="antibodies" value="364 antibodies from 30 providers"/>
</dbReference>
<dbReference type="DNASU" id="6927"/>
<dbReference type="Ensembl" id="ENST00000257555.11">
    <molecule id="P20823-1"/>
    <property type="protein sequence ID" value="ENSP00000257555.5"/>
    <property type="gene ID" value="ENSG00000135100.19"/>
</dbReference>
<dbReference type="Ensembl" id="ENST00000538646.5">
    <molecule id="P20823-4"/>
    <property type="protein sequence ID" value="ENSP00000443964.1"/>
    <property type="gene ID" value="ENSG00000135100.19"/>
</dbReference>
<dbReference type="Ensembl" id="ENST00000540108.1">
    <molecule id="P20823-8"/>
    <property type="protein sequence ID" value="ENSP00000445445.1"/>
    <property type="gene ID" value="ENSG00000135100.19"/>
</dbReference>
<dbReference type="Ensembl" id="ENST00000541395.5">
    <molecule id="P20823-7"/>
    <property type="protein sequence ID" value="ENSP00000443112.1"/>
    <property type="gene ID" value="ENSG00000135100.19"/>
</dbReference>
<dbReference type="Ensembl" id="ENST00000541924.5">
    <molecule id="P20823-5"/>
    <property type="protein sequence ID" value="ENSP00000440361.1"/>
    <property type="gene ID" value="ENSG00000135100.19"/>
</dbReference>
<dbReference type="GeneID" id="6927"/>
<dbReference type="KEGG" id="hsa:6927"/>
<dbReference type="MANE-Select" id="ENST00000257555.11">
    <property type="protein sequence ID" value="ENSP00000257555.5"/>
    <property type="RefSeq nucleotide sequence ID" value="NM_000545.8"/>
    <property type="RefSeq protein sequence ID" value="NP_000536.6"/>
</dbReference>
<dbReference type="UCSC" id="uc021rfb.2">
    <molecule id="P20823-1"/>
    <property type="organism name" value="human"/>
</dbReference>
<dbReference type="AGR" id="HGNC:11621"/>
<dbReference type="CTD" id="6927"/>
<dbReference type="DisGeNET" id="6927"/>
<dbReference type="GeneCards" id="HNF1A"/>
<dbReference type="GeneReviews" id="HNF1A"/>
<dbReference type="HGNC" id="HGNC:11621">
    <property type="gene designation" value="HNF1A"/>
</dbReference>
<dbReference type="MalaCards" id="HNF1A"/>
<dbReference type="MIM" id="142330">
    <property type="type" value="phenotype"/>
</dbReference>
<dbReference type="MIM" id="142410">
    <property type="type" value="gene"/>
</dbReference>
<dbReference type="MIM" id="600496">
    <property type="type" value="phenotype"/>
</dbReference>
<dbReference type="MIM" id="606391">
    <property type="type" value="phenotype"/>
</dbReference>
<dbReference type="MIM" id="612520">
    <property type="type" value="phenotype"/>
</dbReference>
<dbReference type="neXtProt" id="NX_P20823"/>
<dbReference type="OpenTargets" id="ENSG00000135100"/>
<dbReference type="Orphanet" id="319303">
    <property type="disease" value="Chromophobe renal cell carcinoma"/>
</dbReference>
<dbReference type="Orphanet" id="404511">
    <property type="disease" value="Clear cell papillary renal cell carcinoma"/>
</dbReference>
<dbReference type="Orphanet" id="324575">
    <property type="disease" value="Hyperinsulinism due to HNF1A deficiency"/>
</dbReference>
<dbReference type="Orphanet" id="552">
    <property type="disease" value="MODY"/>
</dbReference>
<dbReference type="PharmGKB" id="PA36380"/>
<dbReference type="VEuPathDB" id="HostDB:ENSG00000135100"/>
<dbReference type="eggNOG" id="ENOG502QRPW">
    <property type="taxonomic scope" value="Eukaryota"/>
</dbReference>
<dbReference type="GeneTree" id="ENSGT00940000153818"/>
<dbReference type="HOGENOM" id="CLU_068818_0_0_1"/>
<dbReference type="InParanoid" id="P20823"/>
<dbReference type="OrthoDB" id="10069265at2759"/>
<dbReference type="PAN-GO" id="P20823">
    <property type="GO annotations" value="4 GO annotations based on evolutionary models"/>
</dbReference>
<dbReference type="PhylomeDB" id="P20823"/>
<dbReference type="TreeFam" id="TF320327"/>
<dbReference type="PathwayCommons" id="P20823"/>
<dbReference type="Reactome" id="R-HSA-210745">
    <property type="pathway name" value="Regulation of gene expression in beta cells"/>
</dbReference>
<dbReference type="SignaLink" id="P20823"/>
<dbReference type="SIGNOR" id="P20823"/>
<dbReference type="BioGRID-ORCS" id="6927">
    <property type="hits" value="53 hits in 1187 CRISPR screens"/>
</dbReference>
<dbReference type="ChiTaRS" id="HNF1A">
    <property type="organism name" value="human"/>
</dbReference>
<dbReference type="EvolutionaryTrace" id="P20823"/>
<dbReference type="GeneWiki" id="HNF1A"/>
<dbReference type="GenomeRNAi" id="6927"/>
<dbReference type="Pharos" id="P20823">
    <property type="development level" value="Tbio"/>
</dbReference>
<dbReference type="PRO" id="PR:P20823"/>
<dbReference type="Proteomes" id="UP000005640">
    <property type="component" value="Chromosome 12"/>
</dbReference>
<dbReference type="RNAct" id="P20823">
    <property type="molecule type" value="protein"/>
</dbReference>
<dbReference type="Bgee" id="ENSG00000135100">
    <property type="expression patterns" value="Expressed in right lobe of liver and 59 other cell types or tissues"/>
</dbReference>
<dbReference type="ExpressionAtlas" id="P20823">
    <property type="expression patterns" value="baseline and differential"/>
</dbReference>
<dbReference type="GO" id="GO:0000785">
    <property type="term" value="C:chromatin"/>
    <property type="evidence" value="ECO:0000247"/>
    <property type="project" value="NTNU_SB"/>
</dbReference>
<dbReference type="GO" id="GO:0005737">
    <property type="term" value="C:cytoplasm"/>
    <property type="evidence" value="ECO:0000314"/>
    <property type="project" value="UniProtKB"/>
</dbReference>
<dbReference type="GO" id="GO:0005634">
    <property type="term" value="C:nucleus"/>
    <property type="evidence" value="ECO:0000314"/>
    <property type="project" value="UniProtKB"/>
</dbReference>
<dbReference type="GO" id="GO:0032991">
    <property type="term" value="C:protein-containing complex"/>
    <property type="evidence" value="ECO:0000314"/>
    <property type="project" value="UniProtKB"/>
</dbReference>
<dbReference type="GO" id="GO:0003677">
    <property type="term" value="F:DNA binding"/>
    <property type="evidence" value="ECO:0000314"/>
    <property type="project" value="UniProtKB"/>
</dbReference>
<dbReference type="GO" id="GO:0001228">
    <property type="term" value="F:DNA-binding transcription activator activity, RNA polymerase II-specific"/>
    <property type="evidence" value="ECO:0000250"/>
    <property type="project" value="BHF-UCL"/>
</dbReference>
<dbReference type="GO" id="GO:0003700">
    <property type="term" value="F:DNA-binding transcription factor activity"/>
    <property type="evidence" value="ECO:0000314"/>
    <property type="project" value="UniProtKB"/>
</dbReference>
<dbReference type="GO" id="GO:0000981">
    <property type="term" value="F:DNA-binding transcription factor activity, RNA polymerase II-specific"/>
    <property type="evidence" value="ECO:0000247"/>
    <property type="project" value="NTNU_SB"/>
</dbReference>
<dbReference type="GO" id="GO:0046983">
    <property type="term" value="F:protein dimerization activity"/>
    <property type="evidence" value="ECO:0000353"/>
    <property type="project" value="UniProtKB"/>
</dbReference>
<dbReference type="GO" id="GO:0046982">
    <property type="term" value="F:protein heterodimerization activity"/>
    <property type="evidence" value="ECO:0000314"/>
    <property type="project" value="UniProtKB"/>
</dbReference>
<dbReference type="GO" id="GO:0042803">
    <property type="term" value="F:protein homodimerization activity"/>
    <property type="evidence" value="ECO:0000353"/>
    <property type="project" value="UniProtKB"/>
</dbReference>
<dbReference type="GO" id="GO:0000978">
    <property type="term" value="F:RNA polymerase II cis-regulatory region sequence-specific DNA binding"/>
    <property type="evidence" value="ECO:0000318"/>
    <property type="project" value="GO_Central"/>
</dbReference>
<dbReference type="GO" id="GO:0000976">
    <property type="term" value="F:transcription cis-regulatory region binding"/>
    <property type="evidence" value="ECO:0000314"/>
    <property type="project" value="UniProtKB"/>
</dbReference>
<dbReference type="GO" id="GO:0046323">
    <property type="term" value="P:D-glucose import"/>
    <property type="evidence" value="ECO:0000315"/>
    <property type="project" value="UniProtKB"/>
</dbReference>
<dbReference type="GO" id="GO:0042593">
    <property type="term" value="P:glucose homeostasis"/>
    <property type="evidence" value="ECO:0000315"/>
    <property type="project" value="UniProtKB"/>
</dbReference>
<dbReference type="GO" id="GO:0030073">
    <property type="term" value="P:insulin secretion"/>
    <property type="evidence" value="ECO:0000315"/>
    <property type="project" value="UniProtKB"/>
</dbReference>
<dbReference type="GO" id="GO:0001889">
    <property type="term" value="P:liver development"/>
    <property type="evidence" value="ECO:0007669"/>
    <property type="project" value="InterPro"/>
</dbReference>
<dbReference type="GO" id="GO:0031016">
    <property type="term" value="P:pancreas development"/>
    <property type="evidence" value="ECO:0007669"/>
    <property type="project" value="InterPro"/>
</dbReference>
<dbReference type="GO" id="GO:0045893">
    <property type="term" value="P:positive regulation of DNA-templated transcription"/>
    <property type="evidence" value="ECO:0000314"/>
    <property type="project" value="UniProtKB"/>
</dbReference>
<dbReference type="GO" id="GO:0045944">
    <property type="term" value="P:positive regulation of transcription by RNA polymerase II"/>
    <property type="evidence" value="ECO:0000250"/>
    <property type="project" value="BHF-UCL"/>
</dbReference>
<dbReference type="GO" id="GO:0060261">
    <property type="term" value="P:positive regulation of transcription initiation by RNA polymerase II"/>
    <property type="evidence" value="ECO:0000316"/>
    <property type="project" value="UniProtKB"/>
</dbReference>
<dbReference type="GO" id="GO:0006357">
    <property type="term" value="P:regulation of transcription by RNA polymerase II"/>
    <property type="evidence" value="ECO:0000314"/>
    <property type="project" value="BHF-UCL"/>
</dbReference>
<dbReference type="GO" id="GO:0035623">
    <property type="term" value="P:renal D-glucose absorption"/>
    <property type="evidence" value="ECO:0000315"/>
    <property type="project" value="UniProtKB"/>
</dbReference>
<dbReference type="CDD" id="cd00086">
    <property type="entry name" value="homeodomain"/>
    <property type="match status" value="1"/>
</dbReference>
<dbReference type="DisProt" id="DP01620"/>
<dbReference type="FunFam" id="1.10.10.60:FF:000043">
    <property type="entry name" value="Hepatocyte nuclear factor 1-beta"/>
    <property type="match status" value="1"/>
</dbReference>
<dbReference type="FunFam" id="1.10.260.40:FF:000009">
    <property type="entry name" value="Hepatocyte nuclear factor 1-beta"/>
    <property type="match status" value="1"/>
</dbReference>
<dbReference type="Gene3D" id="1.10.10.60">
    <property type="entry name" value="Homeodomain-like"/>
    <property type="match status" value="1"/>
</dbReference>
<dbReference type="Gene3D" id="1.10.260.40">
    <property type="entry name" value="lambda repressor-like DNA-binding domains"/>
    <property type="match status" value="1"/>
</dbReference>
<dbReference type="InterPro" id="IPR001356">
    <property type="entry name" value="HD"/>
</dbReference>
<dbReference type="InterPro" id="IPR039066">
    <property type="entry name" value="HNF-1"/>
</dbReference>
<dbReference type="InterPro" id="IPR006899">
    <property type="entry name" value="HNF-1_N"/>
</dbReference>
<dbReference type="InterPro" id="IPR044869">
    <property type="entry name" value="HNF-1_POU"/>
</dbReference>
<dbReference type="InterPro" id="IPR023219">
    <property type="entry name" value="HNF1_dimer_N_dom_sf"/>
</dbReference>
<dbReference type="InterPro" id="IPR006898">
    <property type="entry name" value="HNF1a_C"/>
</dbReference>
<dbReference type="InterPro" id="IPR006897">
    <property type="entry name" value="HNF1b_C"/>
</dbReference>
<dbReference type="InterPro" id="IPR044866">
    <property type="entry name" value="HNF_P1"/>
</dbReference>
<dbReference type="InterPro" id="IPR009057">
    <property type="entry name" value="Homeodomain-like_sf"/>
</dbReference>
<dbReference type="InterPro" id="IPR010982">
    <property type="entry name" value="Lambda_DNA-bd_dom_sf"/>
</dbReference>
<dbReference type="PANTHER" id="PTHR11568">
    <property type="entry name" value="HEPATOCYTE NUCLEAR FACTOR 1"/>
    <property type="match status" value="1"/>
</dbReference>
<dbReference type="PANTHER" id="PTHR11568:SF4">
    <property type="entry name" value="HEPATOCYTE NUCLEAR FACTOR 1-ALPHA"/>
    <property type="match status" value="1"/>
</dbReference>
<dbReference type="Pfam" id="PF04814">
    <property type="entry name" value="HNF-1_N"/>
    <property type="match status" value="1"/>
</dbReference>
<dbReference type="Pfam" id="PF04813">
    <property type="entry name" value="HNF-1A_C"/>
    <property type="match status" value="1"/>
</dbReference>
<dbReference type="Pfam" id="PF04812">
    <property type="entry name" value="HNF-1B_C"/>
    <property type="match status" value="1"/>
</dbReference>
<dbReference type="SMART" id="SM00389">
    <property type="entry name" value="HOX"/>
    <property type="match status" value="1"/>
</dbReference>
<dbReference type="SUPFAM" id="SSF100957">
    <property type="entry name" value="Dimerization cofactor of HNF-1 alpha"/>
    <property type="match status" value="1"/>
</dbReference>
<dbReference type="SUPFAM" id="SSF46689">
    <property type="entry name" value="Homeodomain-like"/>
    <property type="match status" value="1"/>
</dbReference>
<dbReference type="SUPFAM" id="SSF47413">
    <property type="entry name" value="lambda repressor-like DNA-binding domains"/>
    <property type="match status" value="1"/>
</dbReference>
<dbReference type="PROSITE" id="PS51937">
    <property type="entry name" value="HNF_P1"/>
    <property type="match status" value="1"/>
</dbReference>
<dbReference type="PROSITE" id="PS00027">
    <property type="entry name" value="HOMEOBOX_1"/>
    <property type="match status" value="1"/>
</dbReference>
<dbReference type="PROSITE" id="PS50071">
    <property type="entry name" value="HOMEOBOX_2"/>
    <property type="match status" value="1"/>
</dbReference>
<dbReference type="PROSITE" id="PS51936">
    <property type="entry name" value="POU_4"/>
    <property type="match status" value="1"/>
</dbReference>
<proteinExistence type="evidence at protein level"/>
<accession>P20823</accession>
<accession>A0A0A0MQU7</accession>
<accession>A5Z2R8</accession>
<accession>E0YMJ5</accession>
<accession>E0YMK0</accession>
<accession>E0YMK1</accession>
<accession>E2I9R4</accession>
<accession>E2I9R5</accession>
<accession>F5H5U3</accession>
<accession>Q2M3H2</accession>
<accession>Q99861</accession>
<keyword id="KW-0002">3D-structure</keyword>
<keyword id="KW-0010">Activator</keyword>
<keyword id="KW-0025">Alternative splicing</keyword>
<keyword id="KW-0219">Diabetes mellitus</keyword>
<keyword id="KW-0225">Disease variant</keyword>
<keyword id="KW-0238">DNA-binding</keyword>
<keyword id="KW-0371">Homeobox</keyword>
<keyword id="KW-1017">Isopeptide bond</keyword>
<keyword id="KW-0539">Nucleus</keyword>
<keyword id="KW-0597">Phosphoprotein</keyword>
<keyword id="KW-1267">Proteomics identification</keyword>
<keyword id="KW-1185">Reference proteome</keyword>
<keyword id="KW-0804">Transcription</keyword>
<keyword id="KW-0805">Transcription regulation</keyword>
<keyword id="KW-0832">Ubl conjugation</keyword>
<organism>
    <name type="scientific">Homo sapiens</name>
    <name type="common">Human</name>
    <dbReference type="NCBI Taxonomy" id="9606"/>
    <lineage>
        <taxon>Eukaryota</taxon>
        <taxon>Metazoa</taxon>
        <taxon>Chordata</taxon>
        <taxon>Craniata</taxon>
        <taxon>Vertebrata</taxon>
        <taxon>Euteleostomi</taxon>
        <taxon>Mammalia</taxon>
        <taxon>Eutheria</taxon>
        <taxon>Euarchontoglires</taxon>
        <taxon>Primates</taxon>
        <taxon>Haplorrhini</taxon>
        <taxon>Catarrhini</taxon>
        <taxon>Hominidae</taxon>
        <taxon>Homo</taxon>
    </lineage>
</organism>